<accession>P41250</accession>
<accession>A0A090N8G0</accession>
<accession>B3KQA2</accession>
<accession>B4DIA0</accession>
<accession>Q969Y1</accession>
<sequence>MPSPRPVLLRGARAALLLLLPPRLLARPSLLLRRSLSAASCPPISLPAAASRSSMDGAGAEEVLAPLRLAVRQQGDLVRKLKEDKAPQVDVDKAVAELKARKRVLEAKELALQPKDDIVDRAKMEDTLKRRFFYDQAFAIYGGVSGLYDFGPVGCALKNNIIQTWRQHFIQEEQILEIDCTMLTPEPVLKTSGHVDKFADFMVKDVKNGECFRADHLLKAHLQKLMSDKKCSVEKKSEMESVLAQLDNYGQQELADLFVNYNVKSPITGNDLSPPVSFNLMFKTFIGPGGNMPGYLRPETAQGIFLNFKRLLEFNQGKLPFAAAQIGNSFRNEISPRSGLIRVREFTMAEIEHFVDPSEKDHPKFQNVADLHLYLYSAKAQVSGQSARKMRLGDAVEQGVINNTVLGYFIGRIYLYLTKVGISPDKLRFRQHMENEMAHYACDCWDAESKTSYGWIEIVGCADRSCYDLSCHARATKVPLVAEKPLKEPKTVNVVQFEPSKGAIGKAYKKDAKLVMEYLAICDECYITEMEMLLNEKGEFTIETEGKTFQLTKDMINVKRFQKTLYVEEVVPNVIEPSFGLGRIMYTVFEHTFHVREGDEQRTFFSFPAVVAPFKCSVLPLSQNQEFMPFVKELSEALTRHGVSHKVDDSSGSIGRRYARTDEIGVAFGVTIDFDTVNKTPHTATLRDRDSMRQIRAEISELPSIVQDLANGNITWADVEARYPLFEGQETGKKETIEE</sequence>
<keyword id="KW-0002">3D-structure</keyword>
<keyword id="KW-0007">Acetylation</keyword>
<keyword id="KW-0024">Alternative initiation</keyword>
<keyword id="KW-0030">Aminoacyl-tRNA synthetase</keyword>
<keyword id="KW-0067">ATP-binding</keyword>
<keyword id="KW-0966">Cell projection</keyword>
<keyword id="KW-0144">Charcot-Marie-Tooth disease</keyword>
<keyword id="KW-0963">Cytoplasm</keyword>
<keyword id="KW-0225">Disease variant</keyword>
<keyword id="KW-0378">Hydrolase</keyword>
<keyword id="KW-0436">Ligase</keyword>
<keyword id="KW-0496">Mitochondrion</keyword>
<keyword id="KW-0523">Neurodegeneration</keyword>
<keyword id="KW-0622">Neuropathy</keyword>
<keyword id="KW-0547">Nucleotide-binding</keyword>
<keyword id="KW-0597">Phosphoprotein</keyword>
<keyword id="KW-0648">Protein biosynthesis</keyword>
<keyword id="KW-1267">Proteomics identification</keyword>
<keyword id="KW-1185">Reference proteome</keyword>
<keyword id="KW-0964">Secreted</keyword>
<keyword id="KW-0808">Transferase</keyword>
<keyword id="KW-0809">Transit peptide</keyword>
<proteinExistence type="evidence at protein level"/>
<name>GARS_HUMAN</name>
<protein>
    <recommendedName>
        <fullName>Glycine--tRNA ligase</fullName>
        <ecNumber evidence="10 18 25">6.1.1.14</ecNumber>
    </recommendedName>
    <alternativeName>
        <fullName evidence="33">Diadenosine tetraphosphate synthetase</fullName>
        <shortName evidence="33">Ap4A synthetase</shortName>
        <ecNumber evidence="13">2.7.7.-</ecNumber>
    </alternativeName>
    <alternativeName>
        <fullName evidence="31">Glycyl-tRNA synthetase</fullName>
        <shortName evidence="31">GlyRS</shortName>
    </alternativeName>
    <alternativeName>
        <fullName evidence="38">Glycyl-tRNA synthetase 1</fullName>
    </alternativeName>
</protein>
<reference key="1">
    <citation type="journal article" date="1994" name="J. Biol. Chem.">
        <title>Human glycyl-tRNA synthetase. Wide divergence of primary structure from bacterial counterpart and species-specific aminoacylation.</title>
        <authorList>
            <person name="Shiba K."/>
            <person name="Schimmel P."/>
            <person name="Motegi H."/>
            <person name="Noda T."/>
        </authorList>
    </citation>
    <scope>NUCLEOTIDE SEQUENCE [MRNA] (ISOFORM 1)</scope>
    <scope>VARIANT ALA-42</scope>
</reference>
<reference key="2">
    <citation type="journal article" date="1995" name="Nucleic Acids Res.">
        <title>Cloning, sequencing and bacterial expression of human glycine tRNA synthetase.</title>
        <authorList>
            <person name="Williams J.H."/>
            <person name="Osvath S.R."/>
            <person name="Khong T.-F."/>
            <person name="Pearse M.J."/>
            <person name="Power D.A."/>
        </authorList>
    </citation>
    <scope>NUCLEOTIDE SEQUENCE [MRNA] (ISOFORM 1)</scope>
    <scope>VARIANT ALA-42</scope>
</reference>
<reference key="3">
    <citation type="journal article" date="2004" name="Nat. Genet.">
        <title>Complete sequencing and characterization of 21,243 full-length human cDNAs.</title>
        <authorList>
            <person name="Ota T."/>
            <person name="Suzuki Y."/>
            <person name="Nishikawa T."/>
            <person name="Otsuki T."/>
            <person name="Sugiyama T."/>
            <person name="Irie R."/>
            <person name="Wakamatsu A."/>
            <person name="Hayashi K."/>
            <person name="Sato H."/>
            <person name="Nagai K."/>
            <person name="Kimura K."/>
            <person name="Makita H."/>
            <person name="Sekine M."/>
            <person name="Obayashi M."/>
            <person name="Nishi T."/>
            <person name="Shibahara T."/>
            <person name="Tanaka T."/>
            <person name="Ishii S."/>
            <person name="Yamamoto J."/>
            <person name="Saito K."/>
            <person name="Kawai Y."/>
            <person name="Isono Y."/>
            <person name="Nakamura Y."/>
            <person name="Nagahari K."/>
            <person name="Murakami K."/>
            <person name="Yasuda T."/>
            <person name="Iwayanagi T."/>
            <person name="Wagatsuma M."/>
            <person name="Shiratori A."/>
            <person name="Sudo H."/>
            <person name="Hosoiri T."/>
            <person name="Kaku Y."/>
            <person name="Kodaira H."/>
            <person name="Kondo H."/>
            <person name="Sugawara M."/>
            <person name="Takahashi M."/>
            <person name="Kanda K."/>
            <person name="Yokoi T."/>
            <person name="Furuya T."/>
            <person name="Kikkawa E."/>
            <person name="Omura Y."/>
            <person name="Abe K."/>
            <person name="Kamihara K."/>
            <person name="Katsuta N."/>
            <person name="Sato K."/>
            <person name="Tanikawa M."/>
            <person name="Yamazaki M."/>
            <person name="Ninomiya K."/>
            <person name="Ishibashi T."/>
            <person name="Yamashita H."/>
            <person name="Murakawa K."/>
            <person name="Fujimori K."/>
            <person name="Tanai H."/>
            <person name="Kimata M."/>
            <person name="Watanabe M."/>
            <person name="Hiraoka S."/>
            <person name="Chiba Y."/>
            <person name="Ishida S."/>
            <person name="Ono Y."/>
            <person name="Takiguchi S."/>
            <person name="Watanabe S."/>
            <person name="Yosida M."/>
            <person name="Hotuta T."/>
            <person name="Kusano J."/>
            <person name="Kanehori K."/>
            <person name="Takahashi-Fujii A."/>
            <person name="Hara H."/>
            <person name="Tanase T.-O."/>
            <person name="Nomura Y."/>
            <person name="Togiya S."/>
            <person name="Komai F."/>
            <person name="Hara R."/>
            <person name="Takeuchi K."/>
            <person name="Arita M."/>
            <person name="Imose N."/>
            <person name="Musashino K."/>
            <person name="Yuuki H."/>
            <person name="Oshima A."/>
            <person name="Sasaki N."/>
            <person name="Aotsuka S."/>
            <person name="Yoshikawa Y."/>
            <person name="Matsunawa H."/>
            <person name="Ichihara T."/>
            <person name="Shiohata N."/>
            <person name="Sano S."/>
            <person name="Moriya S."/>
            <person name="Momiyama H."/>
            <person name="Satoh N."/>
            <person name="Takami S."/>
            <person name="Terashima Y."/>
            <person name="Suzuki O."/>
            <person name="Nakagawa S."/>
            <person name="Senoh A."/>
            <person name="Mizoguchi H."/>
            <person name="Goto Y."/>
            <person name="Shimizu F."/>
            <person name="Wakebe H."/>
            <person name="Hishigaki H."/>
            <person name="Watanabe T."/>
            <person name="Sugiyama A."/>
            <person name="Takemoto M."/>
            <person name="Kawakami B."/>
            <person name="Yamazaki M."/>
            <person name="Watanabe K."/>
            <person name="Kumagai A."/>
            <person name="Itakura S."/>
            <person name="Fukuzumi Y."/>
            <person name="Fujimori Y."/>
            <person name="Komiyama M."/>
            <person name="Tashiro H."/>
            <person name="Tanigami A."/>
            <person name="Fujiwara T."/>
            <person name="Ono T."/>
            <person name="Yamada K."/>
            <person name="Fujii Y."/>
            <person name="Ozaki K."/>
            <person name="Hirao M."/>
            <person name="Ohmori Y."/>
            <person name="Kawabata A."/>
            <person name="Hikiji T."/>
            <person name="Kobatake N."/>
            <person name="Inagaki H."/>
            <person name="Ikema Y."/>
            <person name="Okamoto S."/>
            <person name="Okitani R."/>
            <person name="Kawakami T."/>
            <person name="Noguchi S."/>
            <person name="Itoh T."/>
            <person name="Shigeta K."/>
            <person name="Senba T."/>
            <person name="Matsumura K."/>
            <person name="Nakajima Y."/>
            <person name="Mizuno T."/>
            <person name="Morinaga M."/>
            <person name="Sasaki M."/>
            <person name="Togashi T."/>
            <person name="Oyama M."/>
            <person name="Hata H."/>
            <person name="Watanabe M."/>
            <person name="Komatsu T."/>
            <person name="Mizushima-Sugano J."/>
            <person name="Satoh T."/>
            <person name="Shirai Y."/>
            <person name="Takahashi Y."/>
            <person name="Nakagawa K."/>
            <person name="Okumura K."/>
            <person name="Nagase T."/>
            <person name="Nomura N."/>
            <person name="Kikuchi H."/>
            <person name="Masuho Y."/>
            <person name="Yamashita R."/>
            <person name="Nakai K."/>
            <person name="Yada T."/>
            <person name="Nakamura Y."/>
            <person name="Ohara O."/>
            <person name="Isogai T."/>
            <person name="Sugano S."/>
        </authorList>
    </citation>
    <scope>NUCLEOTIDE SEQUENCE [LARGE SCALE MRNA] (ISOFORM 1)</scope>
    <scope>VARIANT ALA-42</scope>
    <source>
        <tissue>Embryo</tissue>
        <tissue>Hippocampus</tissue>
    </source>
</reference>
<reference key="4">
    <citation type="journal article" date="2003" name="Nature">
        <title>The DNA sequence of human chromosome 7.</title>
        <authorList>
            <person name="Hillier L.W."/>
            <person name="Fulton R.S."/>
            <person name="Fulton L.A."/>
            <person name="Graves T.A."/>
            <person name="Pepin K.H."/>
            <person name="Wagner-McPherson C."/>
            <person name="Layman D."/>
            <person name="Maas J."/>
            <person name="Jaeger S."/>
            <person name="Walker R."/>
            <person name="Wylie K."/>
            <person name="Sekhon M."/>
            <person name="Becker M.C."/>
            <person name="O'Laughlin M.D."/>
            <person name="Schaller M.E."/>
            <person name="Fewell G.A."/>
            <person name="Delehaunty K.D."/>
            <person name="Miner T.L."/>
            <person name="Nash W.E."/>
            <person name="Cordes M."/>
            <person name="Du H."/>
            <person name="Sun H."/>
            <person name="Edwards J."/>
            <person name="Bradshaw-Cordum H."/>
            <person name="Ali J."/>
            <person name="Andrews S."/>
            <person name="Isak A."/>
            <person name="Vanbrunt A."/>
            <person name="Nguyen C."/>
            <person name="Du F."/>
            <person name="Lamar B."/>
            <person name="Courtney L."/>
            <person name="Kalicki J."/>
            <person name="Ozersky P."/>
            <person name="Bielicki L."/>
            <person name="Scott K."/>
            <person name="Holmes A."/>
            <person name="Harkins R."/>
            <person name="Harris A."/>
            <person name="Strong C.M."/>
            <person name="Hou S."/>
            <person name="Tomlinson C."/>
            <person name="Dauphin-Kohlberg S."/>
            <person name="Kozlowicz-Reilly A."/>
            <person name="Leonard S."/>
            <person name="Rohlfing T."/>
            <person name="Rock S.M."/>
            <person name="Tin-Wollam A.-M."/>
            <person name="Abbott A."/>
            <person name="Minx P."/>
            <person name="Maupin R."/>
            <person name="Strowmatt C."/>
            <person name="Latreille P."/>
            <person name="Miller N."/>
            <person name="Johnson D."/>
            <person name="Murray J."/>
            <person name="Woessner J.P."/>
            <person name="Wendl M.C."/>
            <person name="Yang S.-P."/>
            <person name="Schultz B.R."/>
            <person name="Wallis J.W."/>
            <person name="Spieth J."/>
            <person name="Bieri T.A."/>
            <person name="Nelson J.O."/>
            <person name="Berkowicz N."/>
            <person name="Wohldmann P.E."/>
            <person name="Cook L.L."/>
            <person name="Hickenbotham M.T."/>
            <person name="Eldred J."/>
            <person name="Williams D."/>
            <person name="Bedell J.A."/>
            <person name="Mardis E.R."/>
            <person name="Clifton S.W."/>
            <person name="Chissoe S.L."/>
            <person name="Marra M.A."/>
            <person name="Raymond C."/>
            <person name="Haugen E."/>
            <person name="Gillett W."/>
            <person name="Zhou Y."/>
            <person name="James R."/>
            <person name="Phelps K."/>
            <person name="Iadanoto S."/>
            <person name="Bubb K."/>
            <person name="Simms E."/>
            <person name="Levy R."/>
            <person name="Clendenning J."/>
            <person name="Kaul R."/>
            <person name="Kent W.J."/>
            <person name="Furey T.S."/>
            <person name="Baertsch R.A."/>
            <person name="Brent M.R."/>
            <person name="Keibler E."/>
            <person name="Flicek P."/>
            <person name="Bork P."/>
            <person name="Suyama M."/>
            <person name="Bailey J.A."/>
            <person name="Portnoy M.E."/>
            <person name="Torrents D."/>
            <person name="Chinwalla A.T."/>
            <person name="Gish W.R."/>
            <person name="Eddy S.R."/>
            <person name="McPherson J.D."/>
            <person name="Olson M.V."/>
            <person name="Eichler E.E."/>
            <person name="Green E.D."/>
            <person name="Waterston R.H."/>
            <person name="Wilson R.K."/>
        </authorList>
    </citation>
    <scope>NUCLEOTIDE SEQUENCE [LARGE SCALE GENOMIC DNA]</scope>
</reference>
<reference evidence="37" key="5">
    <citation type="journal article" date="2003" name="Science">
        <title>Human chromosome 7: DNA sequence and biology.</title>
        <authorList>
            <person name="Scherer S.W."/>
            <person name="Cheung J."/>
            <person name="MacDonald J.R."/>
            <person name="Osborne L.R."/>
            <person name="Nakabayashi K."/>
            <person name="Herbrick J.-A."/>
            <person name="Carson A.R."/>
            <person name="Parker-Katiraee L."/>
            <person name="Skaug J."/>
            <person name="Khaja R."/>
            <person name="Zhang J."/>
            <person name="Hudek A.K."/>
            <person name="Li M."/>
            <person name="Haddad M."/>
            <person name="Duggan G.E."/>
            <person name="Fernandez B.A."/>
            <person name="Kanematsu E."/>
            <person name="Gentles S."/>
            <person name="Christopoulos C.C."/>
            <person name="Choufani S."/>
            <person name="Kwasnicka D."/>
            <person name="Zheng X.H."/>
            <person name="Lai Z."/>
            <person name="Nusskern D.R."/>
            <person name="Zhang Q."/>
            <person name="Gu Z."/>
            <person name="Lu F."/>
            <person name="Zeesman S."/>
            <person name="Nowaczyk M.J."/>
            <person name="Teshima I."/>
            <person name="Chitayat D."/>
            <person name="Shuman C."/>
            <person name="Weksberg R."/>
            <person name="Zackai E.H."/>
            <person name="Grebe T.A."/>
            <person name="Cox S.R."/>
            <person name="Kirkpatrick S.J."/>
            <person name="Rahman N."/>
            <person name="Friedman J.M."/>
            <person name="Heng H.H.Q."/>
            <person name="Pelicci P.G."/>
            <person name="Lo-Coco F."/>
            <person name="Belloni E."/>
            <person name="Shaffer L.G."/>
            <person name="Pober B."/>
            <person name="Morton C.C."/>
            <person name="Gusella J.F."/>
            <person name="Bruns G.A.P."/>
            <person name="Korf B.R."/>
            <person name="Quade B.J."/>
            <person name="Ligon A.H."/>
            <person name="Ferguson H."/>
            <person name="Higgins A.W."/>
            <person name="Leach N.T."/>
            <person name="Herrick S.R."/>
            <person name="Lemyre E."/>
            <person name="Farra C.G."/>
            <person name="Kim H.-G."/>
            <person name="Summers A.M."/>
            <person name="Gripp K.W."/>
            <person name="Roberts W."/>
            <person name="Szatmari P."/>
            <person name="Winsor E.J.T."/>
            <person name="Grzeschik K.-H."/>
            <person name="Teebi A."/>
            <person name="Minassian B.A."/>
            <person name="Kere J."/>
            <person name="Armengol L."/>
            <person name="Pujana M.A."/>
            <person name="Estivill X."/>
            <person name="Wilson M.D."/>
            <person name="Koop B.F."/>
            <person name="Tosi S."/>
            <person name="Moore G.E."/>
            <person name="Boright A.P."/>
            <person name="Zlotorynski E."/>
            <person name="Kerem B."/>
            <person name="Kroisel P.M."/>
            <person name="Petek E."/>
            <person name="Oscier D.G."/>
            <person name="Mould S.J."/>
            <person name="Doehner H."/>
            <person name="Doehner K."/>
            <person name="Rommens J.M."/>
            <person name="Vincent J.B."/>
            <person name="Venter J.C."/>
            <person name="Li P.W."/>
            <person name="Mural R.J."/>
            <person name="Adams M.D."/>
            <person name="Tsui L.-C."/>
        </authorList>
    </citation>
    <scope>NUCLEOTIDE SEQUENCE [LARGE SCALE GENOMIC DNA]</scope>
</reference>
<reference key="6">
    <citation type="journal article" date="2004" name="Genome Res.">
        <title>The status, quality, and expansion of the NIH full-length cDNA project: the Mammalian Gene Collection (MGC).</title>
        <authorList>
            <consortium name="The MGC Project Team"/>
        </authorList>
    </citation>
    <scope>NUCLEOTIDE SEQUENCE [LARGE SCALE MRNA] (ISOFORM 1)</scope>
    <scope>VARIANT ALA-42</scope>
    <source>
        <tissue>Eye</tissue>
        <tissue>Muscle</tissue>
    </source>
</reference>
<reference key="7">
    <citation type="journal article" date="1994" name="J. Biol. Chem.">
        <title>Primary structure and functional expression of human glycyl-tRNA synthetase, an autoantigen in myositis.</title>
        <authorList>
            <person name="Ge Q."/>
            <person name="Trieu E.P."/>
            <person name="Targoff I.N."/>
        </authorList>
    </citation>
    <scope>NUCLEOTIDE SEQUENCE [MRNA] OF 3-739 (ISOFORM 1)</scope>
    <scope>VARIANT ALA-42</scope>
</reference>
<reference key="8">
    <citation type="journal article" date="2003" name="Am. J. Hum. Genet.">
        <title>Glycyl tRNA synthetase mutations in Charcot-Marie-Tooth disease type 2D and distal spinal muscular atrophy type V.</title>
        <authorList>
            <person name="Antonellis A."/>
            <person name="Ellsworth R.E."/>
            <person name="Sambuughin N."/>
            <person name="Puls I."/>
            <person name="Abel A."/>
            <person name="Lee-Lin S.Q."/>
            <person name="Jordanova A."/>
            <person name="Kremensky I."/>
            <person name="Christodoulou K."/>
            <person name="Middleton L.T."/>
            <person name="Sivakumar K."/>
            <person name="Ionasescu V."/>
            <person name="Funalot B."/>
            <person name="Vance J.M."/>
            <person name="Goldfarb L.G."/>
            <person name="Fischbeck K.H."/>
            <person name="Green E.D."/>
        </authorList>
    </citation>
    <scope>INVOLVEMENT IN CMT2D</scope>
    <scope>VARIANTS CMT2D GLY-125 AND ARG-294</scope>
    <scope>VARIANTS HMND5 PRO-183 AND ARG-580</scope>
    <scope>TISSUE SPECIFICITY</scope>
</reference>
<reference key="9">
    <citation type="journal article" date="2003" name="Nature">
        <title>Proteomic characterization of the human centrosome by protein correlation profiling.</title>
        <authorList>
            <person name="Andersen J.S."/>
            <person name="Wilkinson C.J."/>
            <person name="Mayor T."/>
            <person name="Mortensen P."/>
            <person name="Nigg E.A."/>
            <person name="Mann M."/>
        </authorList>
    </citation>
    <scope>IDENTIFICATION BY MASS SPECTROMETRY</scope>
    <source>
        <tissue>Lymphoblast</tissue>
    </source>
</reference>
<reference key="10">
    <citation type="journal article" date="2006" name="J. Neurosci.">
        <title>Functional analyses of glycyl-tRNA synthetase mutations suggest a key role for tRNA-charging enzymes in peripheral axons.</title>
        <authorList>
            <person name="Antonellis A."/>
            <person name="Lee-Lin S.Q."/>
            <person name="Wasterlain A."/>
            <person name="Leo P."/>
            <person name="Quezado M."/>
            <person name="Goldfarb L.G."/>
            <person name="Myung K."/>
            <person name="Burgess S."/>
            <person name="Fischbeck K.H."/>
            <person name="Green E.D."/>
        </authorList>
    </citation>
    <scope>SUBCELLULAR LOCATION</scope>
    <scope>VARIANTS CMT2D GLY-125 AND ARG-294</scope>
    <scope>CHARACTERIZATION OF VARIANTS CMT2D GLY-125 AND ARG-294</scope>
    <scope>VARIANTS HMND5 PRO-183; ARG-472 AND ARG-580</scope>
    <scope>CHARACTERIZATION OF VARIANTS HMND5 PRO-183; ARG-472 AND ARG-580</scope>
</reference>
<reference key="11">
    <citation type="journal article" date="2007" name="Nat. Neurosci.">
        <title>Cytoplasmic and mitochondrial protein translation in axonal and dendritic terminal arborization.</title>
        <authorList>
            <person name="Chihara T."/>
            <person name="Luginbuhl D."/>
            <person name="Luo L."/>
        </authorList>
    </citation>
    <scope>SUBCELLULAR LOCATION (ISOFORMS 1 AND 2)</scope>
</reference>
<reference key="12">
    <citation type="journal article" date="2009" name="Science">
        <title>Lysine acetylation targets protein complexes and co-regulates major cellular functions.</title>
        <authorList>
            <person name="Choudhary C."/>
            <person name="Kumar C."/>
            <person name="Gnad F."/>
            <person name="Nielsen M.L."/>
            <person name="Rehman M."/>
            <person name="Walther T.C."/>
            <person name="Olsen J.V."/>
            <person name="Mann M."/>
        </authorList>
    </citation>
    <scope>ACETYLATION [LARGE SCALE ANALYSIS] AT LYS-204 AND LYS-501</scope>
    <scope>IDENTIFICATION BY MASS SPECTROMETRY [LARGE SCALE ANALYSIS]</scope>
</reference>
<reference key="13">
    <citation type="journal article" date="2011" name="BMC Syst. Biol.">
        <title>Initial characterization of the human central proteome.</title>
        <authorList>
            <person name="Burkard T.R."/>
            <person name="Planyavsky M."/>
            <person name="Kaupe I."/>
            <person name="Breitwieser F.P."/>
            <person name="Buerckstuemmer T."/>
            <person name="Bennett K.L."/>
            <person name="Superti-Furga G."/>
            <person name="Colinge J."/>
        </authorList>
    </citation>
    <scope>IDENTIFICATION BY MASS SPECTROMETRY [LARGE SCALE ANALYSIS]</scope>
</reference>
<reference key="14">
    <citation type="journal article" date="2013" name="J. Proteome Res.">
        <title>Toward a comprehensive characterization of a human cancer cell phosphoproteome.</title>
        <authorList>
            <person name="Zhou H."/>
            <person name="Di Palma S."/>
            <person name="Preisinger C."/>
            <person name="Peng M."/>
            <person name="Polat A.N."/>
            <person name="Heck A.J."/>
            <person name="Mohammed S."/>
        </authorList>
    </citation>
    <scope>PHOSPHORYLATION [LARGE SCALE ANALYSIS] AT SER-35 AND THR-736</scope>
    <scope>VARIANT [LARGE SCALE ANALYSIS] ALA-42</scope>
    <scope>IDENTIFICATION BY MASS SPECTROMETRY [LARGE SCALE ANALYSIS]</scope>
    <source>
        <tissue>Erythroleukemia</tissue>
    </source>
</reference>
<reference key="15">
    <citation type="journal article" date="2014" name="Hum. Mutat.">
        <title>Impaired function is a common feature of neuropathy-associated glycyl-tRNA synthetase mutations.</title>
        <authorList>
            <person name="Griffin L.B."/>
            <person name="Sakaguchi R."/>
            <person name="McGuigan D."/>
            <person name="Gonzalez M.A."/>
            <person name="Searby C."/>
            <person name="Zuchner S."/>
            <person name="Hou Y.M."/>
            <person name="Antonellis A."/>
        </authorList>
    </citation>
    <scope>SUBCELLULAR LOCATION (ISOFORM 2)</scope>
    <scope>VARIANTS CMT2D VAL-111; ASN-200; PHE-265; ARG-294; LEU-298; PHE-334; ARG-472; ASN-554; ARG-580 AND ALA-652</scope>
    <scope>VARIANT LEU-635</scope>
    <scope>CHARACTERIZATION OF VARIANTS CMT2D VAL-111; GLY-125; PRO-183; ASN-200; PHE-265; ARG-294; LEU-298; PHE-334; ARG-472; ASN-554; ARG-580 AND ALA-652</scope>
    <scope>CHARACTERIZATION OF VARIANT LEU-635</scope>
</reference>
<reference key="16">
    <citation type="journal article" date="2014" name="J. Proteomics">
        <title>An enzyme assisted RP-RPLC approach for in-depth analysis of human liver phosphoproteome.</title>
        <authorList>
            <person name="Bian Y."/>
            <person name="Song C."/>
            <person name="Cheng K."/>
            <person name="Dong M."/>
            <person name="Wang F."/>
            <person name="Huang J."/>
            <person name="Sun D."/>
            <person name="Wang L."/>
            <person name="Ye M."/>
            <person name="Zou H."/>
        </authorList>
    </citation>
    <scope>IDENTIFICATION BY MASS SPECTROMETRY [LARGE SCALE ANALYSIS]</scope>
    <source>
        <tissue>Liver</tissue>
    </source>
</reference>
<reference key="17">
    <citation type="journal article" date="2015" name="Proteomics">
        <title>N-terminome analysis of the human mitochondrial proteome.</title>
        <authorList>
            <person name="Vaca Jacome A.S."/>
            <person name="Rabilloud T."/>
            <person name="Schaeffer-Reiss C."/>
            <person name="Rompais M."/>
            <person name="Ayoub D."/>
            <person name="Lane L."/>
            <person name="Bairoch A."/>
            <person name="Van Dorsselaer A."/>
            <person name="Carapito C."/>
        </authorList>
    </citation>
    <scope>IDENTIFICATION BY MASS SPECTROMETRY [LARGE SCALE ANALYSIS]</scope>
</reference>
<reference key="18">
    <citation type="journal article" date="2015" name="RNA Biol.">
        <title>Elaborate uORF/IRES features control expression and localization of human glycyl-tRNA synthetase.</title>
        <authorList>
            <person name="Alexandrova J."/>
            <person name="Paulus C."/>
            <person name="Rudinger-Thirion J."/>
            <person name="Jossinet F."/>
            <person name="Frugier M."/>
        </authorList>
    </citation>
    <scope>ALTERNATIVE INITIATION</scope>
    <scope>SUBCELLULAR LOCATION (ISOFORMS 1 AND 2)</scope>
    <scope>TISSUE SPECIFICITY (ISOFORMS 1 AND 2)</scope>
</reference>
<reference key="19">
    <citation type="journal article" date="2020" name="Am. J. Med. Genet. A">
        <title>GARS-related disease in infantile spinal muscular atrophy: Implications for diagnosis and treatment.</title>
        <authorList>
            <person name="Markovitz R."/>
            <person name="Ghosh R."/>
            <person name="Kuo M.E."/>
            <person name="Hong W."/>
            <person name="Lim J."/>
            <person name="Bernes S."/>
            <person name="Manberg S."/>
            <person name="Crosby K."/>
            <person name="Tanpaiboon P."/>
            <person name="Bharucha-Goebel D."/>
            <person name="Bonnemann C."/>
            <person name="Mohila C.A."/>
            <person name="Mizerik E."/>
            <person name="Woodbury S."/>
            <person name="Bi W."/>
            <person name="Lotze T."/>
            <person name="Antonellis A."/>
            <person name="Xiao R."/>
            <person name="Potocki L."/>
        </authorList>
    </citation>
    <scope>INVOLVEMENT IN SMAJI</scope>
    <scope>VARIANTS SMAJI ASN-334 AND ARG-652</scope>
    <scope>CHARACTERIZATION OF VARIANT SMAJI ASN-334</scope>
</reference>
<reference key="20">
    <citation type="journal article" date="2007" name="FEBS Lett.">
        <title>Crystal structure of human wildtype and S581L-mutant glycyl-tRNA synthetase, an enzyme underlying distal spinal muscular atrophy.</title>
        <authorList>
            <person name="Cader M.Z."/>
            <person name="Ren J."/>
            <person name="James P.A."/>
            <person name="Bird L.E."/>
            <person name="Talbot K."/>
            <person name="Stammers D.K."/>
        </authorList>
    </citation>
    <scope>X-RAY CRYSTALLOGRAPHY (2.80 ANGSTROMS) OF ISOFORM 2</scope>
    <scope>FUNCTION</scope>
    <scope>SUBUNIT</scope>
    <scope>CHARACTERIZATION OF VARIANT LEU-635</scope>
    <scope>CATALYTIC ACTIVITY</scope>
    <scope>BIOPHYSICOCHEMICAL PROPERTIES</scope>
</reference>
<reference key="21">
    <citation type="journal article" date="2007" name="Proc. Natl. Acad. Sci. U.S.A.">
        <title>Long-range structural effects of a Charcot-Marie-Tooth disease-causing mutation in human glycyl-tRNA synthetase.</title>
        <authorList>
            <person name="Xie W."/>
            <person name="Nangle L.A."/>
            <person name="Zhang W."/>
            <person name="Schimmel P."/>
            <person name="Yang X.-L."/>
        </authorList>
    </citation>
    <scope>X-RAY CRYSTALLOGRAPHY (2.85 ANGSTROMS) OF ISOFORM 2</scope>
    <scope>VARIANT ARG-580</scope>
    <scope>SUBUNIT</scope>
</reference>
<reference evidence="39 40 41 42 43" key="22">
    <citation type="journal article" date="2009" name="J. Biol. Chem.">
        <title>Crystal structures and biochemical analyses suggest a unique mechanism and role for human glycyl-tRNA synthetase in Ap4A homeostasis.</title>
        <authorList>
            <person name="Guo R.-T."/>
            <person name="Chong Y.E."/>
            <person name="Guo M."/>
            <person name="Yang X.-L."/>
        </authorList>
    </citation>
    <scope>X-RAY CRYSTALLOGRAPHY (2.50 ANGSTROMS) OF ISOFORM 2 IN COMPLEXES WITH ATP; AP4A; GLYCINE AND SUBSTRATE ANALOGS</scope>
    <scope>FUNCTION</scope>
    <scope>CATALYTIC ACTIVITY</scope>
    <scope>ACTIVITY REGULATION</scope>
    <scope>REACTION MECHANISM</scope>
    <scope>SUBUNIT</scope>
</reference>
<reference evidence="45 46" key="23">
    <citation type="journal article" date="2014" name="J. Biol. Chem.">
        <title>Cocrystal structures of glycyl-tRNA synthetase in complex with tRNA suggest multiple conformational states in glycylation.</title>
        <authorList>
            <person name="Qin X."/>
            <person name="Hao Z."/>
            <person name="Tian Q."/>
            <person name="Zhang Z."/>
            <person name="Zhou C."/>
            <person name="Xie W."/>
        </authorList>
    </citation>
    <scope>X-RAY CRYSTALLOGRAPHY (3.23 ANGSTROMS) OF 114-739 OF WILD-TYPE AND VARIANT GLY-125 IN COMPLEXES WITH TRNA(GLY); AMP; ATP ANALOG AND GLYCINE</scope>
    <scope>FUNCTION</scope>
    <scope>CATALYTIC ACTIVITY</scope>
    <scope>SUBUNIT</scope>
    <scope>MUTAGENESIS OF ARG-121; ARG-337; ARG-602; TYR-658 AND GLN-729</scope>
    <scope>CHARACTERIZATION OF VARIANT GLY-125</scope>
</reference>
<reference evidence="44 47" key="24">
    <citation type="journal article" date="2016" name="J. Biol. Chem.">
        <title>Large Conformational Changes of Insertion 3 in Human Glycyl-tRNA Synthetase (hGlyRS) during Catalysis.</title>
        <authorList>
            <person name="Deng X."/>
            <person name="Qin X."/>
            <person name="Chen L."/>
            <person name="Jia Q."/>
            <person name="Zhang Y."/>
            <person name="Zhang Z."/>
            <person name="Lei D."/>
            <person name="Ren G."/>
            <person name="Zhou Z."/>
            <person name="Wang Z."/>
            <person name="Li Q."/>
            <person name="Xie W."/>
        </authorList>
    </citation>
    <scope>X-RAY CRYSTALLOGRAPHY (2.74 ANGSTROMS) OF ISOFORM 2 WITH VARIANT GLY-125 AND DOUBLE MUTANT GLY-125/ARG-211 IN COMPLEX WITH TRNA(GLY) AND AMP</scope>
    <scope>MUTAGENESIS OF CYS-211 AND 486-LEU--LYS-490</scope>
</reference>
<reference evidence="48" key="25">
    <citation type="journal article" date="2016" name="J. Mol. Biol.">
        <title>Crystal Structure of the Wild-Type Human GlyRS Bound with tRNA(Gly) in a Productive Conformation.</title>
        <authorList>
            <person name="Qin X."/>
            <person name="Deng X."/>
            <person name="Chen L."/>
            <person name="Xie W."/>
        </authorList>
    </citation>
    <scope>X-RAY CRYSTALLOGRAPHY (2.93 ANGSTROMS) OF ISOFORM 2 IN COMPLEX WITH TRNA(GLY) AND GLYCYL-AMP</scope>
</reference>
<reference key="26">
    <citation type="journal article" date="2006" name="Neurology">
        <title>Severe childhood SMA and axonal CMT due to anticodon binding domain mutations in the GARS gene.</title>
        <authorList>
            <person name="James P.A."/>
            <person name="Cader M.Z."/>
            <person name="Muntoni F."/>
            <person name="Childs A.M."/>
            <person name="Crow Y.J."/>
            <person name="Talbot K."/>
        </authorList>
    </citation>
    <scope>VARIANT LEU-635</scope>
    <scope>VARIANTS CMT2D PHE-334 AND ALA-652</scope>
</reference>
<reference key="27">
    <citation type="journal article" date="2007" name="J. Neurol. Sci.">
        <title>Further evidence for genetic heterogeneity of distal HMN type V, CMT2 with predominant hand involvement and Silver syndrome.</title>
        <authorList>
            <person name="Rohkamm B."/>
            <person name="Reilly M.M."/>
            <person name="Lochmueller H."/>
            <person name="Schlotter-Weigel B."/>
            <person name="Barisic N."/>
            <person name="Schoels L."/>
            <person name="Nicholson G."/>
            <person name="Pareyson D."/>
            <person name="Laura M."/>
            <person name="Janecke A.R."/>
            <person name="Miltenberger-Miltenyi G."/>
            <person name="John E."/>
            <person name="Fischer C."/>
            <person name="Grill F."/>
            <person name="Wakeling W."/>
            <person name="Davis M."/>
            <person name="Pieber T.R."/>
            <person name="Auer-Grumbach M."/>
        </authorList>
    </citation>
    <scope>VARIANT CMT2D VAL-111</scope>
</reference>
<reference key="28">
    <citation type="journal article" date="2010" name="J. Neurol.">
        <title>Charcot-Marie-Tooth disease type 2D with a novel glycyl-tRNA synthetase gene (GARS) mutation.</title>
        <authorList>
            <person name="Hamaguchi A."/>
            <person name="Ishida C."/>
            <person name="Iwasa K."/>
            <person name="Abe A."/>
            <person name="Yamada M."/>
        </authorList>
    </citation>
    <scope>VARIANT CMT2D LEU-298</scope>
</reference>
<reference key="29">
    <citation type="journal article" date="2012" name="J. Peripher. Nerv. Syst.">
        <title>Two novel mutations of GARS in Korean families with distal hereditary motor neuropathy type V.</title>
        <authorList>
            <person name="Lee H.J."/>
            <person name="Park J."/>
            <person name="Nakhro K."/>
            <person name="Park J.M."/>
            <person name="Hur Y.M."/>
            <person name="Choi B.O."/>
            <person name="Chung K.W."/>
        </authorList>
    </citation>
    <scope>VARIANTS HMND5 ASN-200 AND PHE-265</scope>
</reference>
<reference key="30">
    <citation type="journal article" date="2014" name="J. Neurol.">
        <title>Whole-exome sequencing in patients with inherited neuropathies: outcome and challenges.</title>
        <authorList>
            <person name="Schabhuettl M."/>
            <person name="Wieland T."/>
            <person name="Senderek J."/>
            <person name="Baets J."/>
            <person name="Timmerman V."/>
            <person name="De Jonghe P."/>
            <person name="Reilly M.M."/>
            <person name="Stieglbauer K."/>
            <person name="Laich E."/>
            <person name="Windhager R."/>
            <person name="Erwa W."/>
            <person name="Trajanoski S."/>
            <person name="Strom T.M."/>
            <person name="Auer-Grumbach M."/>
        </authorList>
    </citation>
    <scope>VARIANT HMND5 ARG-472</scope>
</reference>
<reference key="31">
    <citation type="journal article" date="2014" name="J. Neurol. Neurosurg. Psych.">
        <title>Application of whole exome sequencing in undiagnosed inherited polyneuropathies.</title>
        <authorList>
            <person name="Klein C.J."/>
            <person name="Middha S."/>
            <person name="Duan X."/>
            <person name="Wu Y."/>
            <person name="Litchy W.J."/>
            <person name="Gu W."/>
            <person name="Dyck P.J."/>
            <person name="Gavrilova R.H."/>
            <person name="Smith D.I."/>
            <person name="Kocher J.P."/>
            <person name="Dyck P.J."/>
        </authorList>
    </citation>
    <scope>VARIANT CMT2D PHE-334</scope>
</reference>
<reference key="32">
    <citation type="journal article" date="2015" name="PLoS ONE">
        <title>Two novel de novo gars mutations cause early-onset axonal Charcot-Marie-tooth disease.</title>
        <authorList>
            <person name="Liao Y.C."/>
            <person name="Liu Y.T."/>
            <person name="Tsai P.C."/>
            <person name="Chang C.C."/>
            <person name="Huang Y.H."/>
            <person name="Soong B.W."/>
            <person name="Lee Y.C."/>
        </authorList>
    </citation>
    <scope>VARIANTS CMT2D TYR-200 AND ARG-292</scope>
</reference>
<reference key="33">
    <citation type="journal article" date="2015" name="Nature">
        <title>CMT2D neuropathy is linked to the neomorphic binding activity of glycyl-tRNA synthetase.</title>
        <authorList>
            <person name="He W."/>
            <person name="Bai G."/>
            <person name="Zhou H."/>
            <person name="Wei N."/>
            <person name="White N.M."/>
            <person name="Lauer J."/>
            <person name="Liu H."/>
            <person name="Shi Y."/>
            <person name="Dumitru C.D."/>
            <person name="Lettieri K."/>
            <person name="Shubayev V."/>
            <person name="Jordanova A."/>
            <person name="Guergueltcheva V."/>
            <person name="Griffin P.R."/>
            <person name="Burgess R.W."/>
            <person name="Pfaff S.L."/>
            <person name="Yang X.L."/>
        </authorList>
    </citation>
    <scope>CHARACTERIZATION OF VARIANTS CMT2D GLY-125 AND ARG-294</scope>
    <scope>CHARACTERIZATION OF VARIANT HMND5 PRO-183</scope>
</reference>
<reference key="34">
    <citation type="journal article" date="2016" name="Nature">
        <title>Corrigendum: CMT2D neuropathy is linked to the neomorphic binding activity of glycyl-tRNA synthetase.</title>
        <authorList>
            <person name="He W."/>
            <person name="Bai G."/>
            <person name="Zhou H."/>
            <person name="Wei N."/>
            <person name="White N.M."/>
            <person name="Lauer J."/>
            <person name="Liu H."/>
            <person name="Shi Y."/>
            <person name="Dan Dumitru C."/>
            <person name="Lettieri K."/>
            <person name="Shubayev V."/>
            <person name="Jordanova A."/>
            <person name="Guergueltcheva V."/>
            <person name="Griffin P.R."/>
            <person name="Burgess R.W."/>
            <person name="Pfaff S.L."/>
            <person name="Yang X.L."/>
        </authorList>
    </citation>
    <scope>ERRATUM OF PUBMED:26503042</scope>
</reference>
<reference key="35">
    <citation type="journal article" date="2017" name="Hum. Mutat.">
        <title>Compound heterozygosity for loss-of-function GARS variants results in a multisystem developmental syndrome that includes severe growth retardation.</title>
        <authorList>
            <person name="Oprescu S.N."/>
            <person name="Chepa-Lotrea X."/>
            <person name="Takase R."/>
            <person name="Golas G."/>
            <person name="Markello T.C."/>
            <person name="Adams D.R."/>
            <person name="Toro C."/>
            <person name="Gropman A.L."/>
            <person name="Hou Y.M."/>
            <person name="Malicdan M.C.V."/>
            <person name="Gahl W.A."/>
            <person name="Tifft C.J."/>
            <person name="Antonellis A."/>
        </authorList>
    </citation>
    <scope>VARIANT GLN-310</scope>
    <scope>CHARACTERIZATION OF VARIANT GLN-310</scope>
    <scope>CATALYTIC ACTIVITY</scope>
    <scope>FUNCTION</scope>
    <scope>BIOPHYSICOCHEMICAL PROPERTIES</scope>
</reference>
<reference key="36">
    <citation type="journal article" date="2017" name="PLoS ONE">
        <title>Compound heterozygous mutations in glycyl-tRNA synthetase (GARS) cause mitochondrial respiratory chain dysfunction.</title>
        <authorList>
            <person name="Nafisinia M."/>
            <person name="Riley L.G."/>
            <person name="Gold W.A."/>
            <person name="Bhattacharya K."/>
            <person name="Broderick C.R."/>
            <person name="Thorburn D.R."/>
            <person name="Simons C."/>
            <person name="Christodoulou J."/>
        </authorList>
    </citation>
    <scope>VARIANTS ILE-268 AND CYS-412</scope>
</reference>
<reference key="37">
    <citation type="journal article" date="2019" name="Mol. Genet. Genomic Med.">
        <title>A novel mutation in the GARS gene in a Malian family with Charcot-Marie-Tooth disease.</title>
        <authorList>
            <consortium name="H3Africa Consortium"/>
            <person name="Yalcouye A."/>
            <person name="Diallo S.H."/>
            <person name="Coulibaly T."/>
            <person name="Cisse L."/>
            <person name="Diallo S."/>
            <person name="Samassekou O."/>
            <person name="Diarra S."/>
            <person name="Coulibaly D."/>
            <person name="Keita M."/>
            <person name="Guinto C.O."/>
            <person name="Fischbeck K."/>
            <person name="Landoure G."/>
        </authorList>
    </citation>
    <scope>VARIANT CMT2D TYR-265</scope>
</reference>
<gene>
    <name evidence="38" type="primary">GARS1</name>
    <name type="synonym">GARS</name>
</gene>
<dbReference type="EC" id="6.1.1.14" evidence="10 18 25"/>
<dbReference type="EC" id="2.7.7.-" evidence="13"/>
<dbReference type="EMBL" id="D30658">
    <property type="protein sequence ID" value="BAA06338.1"/>
    <property type="molecule type" value="mRNA"/>
</dbReference>
<dbReference type="EMBL" id="U09510">
    <property type="protein sequence ID" value="AAA86443.1"/>
    <property type="status" value="ALT_INIT"/>
    <property type="molecule type" value="mRNA"/>
</dbReference>
<dbReference type="EMBL" id="AK074524">
    <property type="protein sequence ID" value="BAG51964.1"/>
    <property type="molecule type" value="mRNA"/>
</dbReference>
<dbReference type="EMBL" id="AK295490">
    <property type="protein sequence ID" value="BAG58412.1"/>
    <property type="molecule type" value="mRNA"/>
</dbReference>
<dbReference type="EMBL" id="AC005154">
    <property type="status" value="NOT_ANNOTATED_CDS"/>
    <property type="molecule type" value="Genomic_DNA"/>
</dbReference>
<dbReference type="EMBL" id="AC006969">
    <property type="status" value="NOT_ANNOTATED_CDS"/>
    <property type="molecule type" value="Genomic_DNA"/>
</dbReference>
<dbReference type="EMBL" id="AC004976">
    <property type="protein sequence ID" value="AAC71652.1"/>
    <property type="molecule type" value="Genomic_DNA"/>
</dbReference>
<dbReference type="EMBL" id="AACC02000087">
    <property type="protein sequence ID" value="EAL24449.1"/>
    <property type="molecule type" value="Genomic_DNA"/>
</dbReference>
<dbReference type="EMBL" id="BC007722">
    <property type="protein sequence ID" value="AAH07722.1"/>
    <property type="molecule type" value="mRNA"/>
</dbReference>
<dbReference type="EMBL" id="BC007755">
    <property type="protein sequence ID" value="AAH07755.1"/>
    <property type="molecule type" value="mRNA"/>
</dbReference>
<dbReference type="EMBL" id="U09587">
    <property type="protein sequence ID" value="AAA57001.1"/>
    <property type="status" value="ALT_INIT"/>
    <property type="molecule type" value="mRNA"/>
</dbReference>
<dbReference type="CCDS" id="CCDS43564.1">
    <molecule id="P41250-1"/>
</dbReference>
<dbReference type="PIR" id="A55314">
    <property type="entry name" value="A55314"/>
</dbReference>
<dbReference type="RefSeq" id="NP_001303701.1">
    <molecule id="P41250-2"/>
    <property type="nucleotide sequence ID" value="NM_001316772.1"/>
</dbReference>
<dbReference type="RefSeq" id="NP_002038.2">
    <molecule id="P41250-1"/>
    <property type="nucleotide sequence ID" value="NM_002047.4"/>
</dbReference>
<dbReference type="PDB" id="2PME">
    <property type="method" value="X-ray"/>
    <property type="resolution" value="2.90 A"/>
    <property type="chains" value="A=55-739"/>
</dbReference>
<dbReference type="PDB" id="2PMF">
    <property type="method" value="X-ray"/>
    <property type="resolution" value="2.85 A"/>
    <property type="chains" value="A=55-739"/>
</dbReference>
<dbReference type="PDB" id="2Q5H">
    <property type="method" value="X-ray"/>
    <property type="resolution" value="3.00 A"/>
    <property type="chains" value="A=55-739"/>
</dbReference>
<dbReference type="PDB" id="2Q5I">
    <property type="method" value="X-ray"/>
    <property type="resolution" value="2.80 A"/>
    <property type="chains" value="A=55-739"/>
</dbReference>
<dbReference type="PDB" id="2ZT5">
    <property type="method" value="X-ray"/>
    <property type="resolution" value="2.50 A"/>
    <property type="chains" value="A=55-739"/>
</dbReference>
<dbReference type="PDB" id="2ZT6">
    <property type="method" value="X-ray"/>
    <property type="resolution" value="3.08 A"/>
    <property type="chains" value="A=55-739"/>
</dbReference>
<dbReference type="PDB" id="2ZT7">
    <property type="method" value="X-ray"/>
    <property type="resolution" value="2.70 A"/>
    <property type="chains" value="A=55-739"/>
</dbReference>
<dbReference type="PDB" id="2ZT8">
    <property type="method" value="X-ray"/>
    <property type="resolution" value="3.35 A"/>
    <property type="chains" value="A=55-739"/>
</dbReference>
<dbReference type="PDB" id="2ZXF">
    <property type="method" value="X-ray"/>
    <property type="resolution" value="3.40 A"/>
    <property type="chains" value="A=55-739"/>
</dbReference>
<dbReference type="PDB" id="4KQE">
    <property type="method" value="X-ray"/>
    <property type="resolution" value="2.74 A"/>
    <property type="chains" value="A=55-739"/>
</dbReference>
<dbReference type="PDB" id="4KR2">
    <property type="method" value="X-ray"/>
    <property type="resolution" value="3.29 A"/>
    <property type="chains" value="A=114-739"/>
</dbReference>
<dbReference type="PDB" id="4KR3">
    <property type="method" value="X-ray"/>
    <property type="resolution" value="3.24 A"/>
    <property type="chains" value="A=114-739"/>
</dbReference>
<dbReference type="PDB" id="4QEI">
    <property type="method" value="X-ray"/>
    <property type="resolution" value="2.88 A"/>
    <property type="chains" value="A=118-739"/>
</dbReference>
<dbReference type="PDB" id="5E6M">
    <property type="method" value="X-ray"/>
    <property type="resolution" value="2.93 A"/>
    <property type="chains" value="A/B=55-739"/>
</dbReference>
<dbReference type="PDBsum" id="2PME"/>
<dbReference type="PDBsum" id="2PMF"/>
<dbReference type="PDBsum" id="2Q5H"/>
<dbReference type="PDBsum" id="2Q5I"/>
<dbReference type="PDBsum" id="2ZT5"/>
<dbReference type="PDBsum" id="2ZT6"/>
<dbReference type="PDBsum" id="2ZT7"/>
<dbReference type="PDBsum" id="2ZT8"/>
<dbReference type="PDBsum" id="2ZXF"/>
<dbReference type="PDBsum" id="4KQE"/>
<dbReference type="PDBsum" id="4KR2"/>
<dbReference type="PDBsum" id="4KR3"/>
<dbReference type="PDBsum" id="4QEI"/>
<dbReference type="PDBsum" id="5E6M"/>
<dbReference type="SMR" id="P41250"/>
<dbReference type="BioGRID" id="108887">
    <property type="interactions" value="271"/>
</dbReference>
<dbReference type="DIP" id="DIP-50471N"/>
<dbReference type="FunCoup" id="P41250">
    <property type="interactions" value="2545"/>
</dbReference>
<dbReference type="IntAct" id="P41250">
    <property type="interactions" value="73"/>
</dbReference>
<dbReference type="MINT" id="P41250"/>
<dbReference type="STRING" id="9606.ENSP00000373918"/>
<dbReference type="ChEMBL" id="CHEMBL4105815"/>
<dbReference type="DrugBank" id="DB00145">
    <property type="generic name" value="Glycine"/>
</dbReference>
<dbReference type="MoonProt" id="P41250"/>
<dbReference type="GlyGen" id="P41250">
    <property type="glycosylation" value="1 site, 1 O-linked glycan (1 site)"/>
</dbReference>
<dbReference type="iPTMnet" id="P41250"/>
<dbReference type="MetOSite" id="P41250"/>
<dbReference type="PhosphoSitePlus" id="P41250"/>
<dbReference type="SwissPalm" id="P41250"/>
<dbReference type="BioMuta" id="GARS"/>
<dbReference type="DMDM" id="313104283"/>
<dbReference type="jPOST" id="P41250"/>
<dbReference type="MassIVE" id="P41250"/>
<dbReference type="PaxDb" id="9606-ENSP00000373918"/>
<dbReference type="PeptideAtlas" id="P41250"/>
<dbReference type="ProteomicsDB" id="55453"/>
<dbReference type="Pumba" id="P41250"/>
<dbReference type="ABCD" id="P41250">
    <property type="antibodies" value="3 sequenced antibodies"/>
</dbReference>
<dbReference type="Antibodypedia" id="6744">
    <property type="antibodies" value="376 antibodies from 32 providers"/>
</dbReference>
<dbReference type="DNASU" id="2617"/>
<dbReference type="Ensembl" id="ENST00000389266.8">
    <molecule id="P41250-1"/>
    <property type="protein sequence ID" value="ENSP00000373918.3"/>
    <property type="gene ID" value="ENSG00000106105.15"/>
</dbReference>
<dbReference type="GeneID" id="2617"/>
<dbReference type="KEGG" id="hsa:2617"/>
<dbReference type="MANE-Select" id="ENST00000389266.8">
    <property type="protein sequence ID" value="ENSP00000373918.3"/>
    <property type="RefSeq nucleotide sequence ID" value="NM_002047.4"/>
    <property type="RefSeq protein sequence ID" value="NP_002038.2"/>
</dbReference>
<dbReference type="UCSC" id="uc003tbm.4">
    <molecule id="P41250-1"/>
    <property type="organism name" value="human"/>
</dbReference>
<dbReference type="AGR" id="HGNC:4162"/>
<dbReference type="CTD" id="2617"/>
<dbReference type="DisGeNET" id="2617"/>
<dbReference type="GeneCards" id="GARS1"/>
<dbReference type="GeneReviews" id="GARS1"/>
<dbReference type="HGNC" id="HGNC:4162">
    <property type="gene designation" value="GARS1"/>
</dbReference>
<dbReference type="HPA" id="ENSG00000106105">
    <property type="expression patterns" value="Low tissue specificity"/>
</dbReference>
<dbReference type="MalaCards" id="GARS1"/>
<dbReference type="MIM" id="600287">
    <property type="type" value="gene"/>
</dbReference>
<dbReference type="MIM" id="600794">
    <property type="type" value="phenotype"/>
</dbReference>
<dbReference type="MIM" id="601472">
    <property type="type" value="phenotype"/>
</dbReference>
<dbReference type="MIM" id="619042">
    <property type="type" value="phenotype"/>
</dbReference>
<dbReference type="neXtProt" id="NX_P41250"/>
<dbReference type="OpenTargets" id="ENSG00000106105"/>
<dbReference type="Orphanet" id="99938">
    <property type="disease" value="Autosomal dominant Charcot-Marie-Tooth disease type 2D"/>
</dbReference>
<dbReference type="Orphanet" id="139536">
    <property type="disease" value="Distal hereditary motor neuropathy type 5"/>
</dbReference>
<dbReference type="PharmGKB" id="PA28575"/>
<dbReference type="VEuPathDB" id="HostDB:ENSG00000106105"/>
<dbReference type="eggNOG" id="KOG2298">
    <property type="taxonomic scope" value="Eukaryota"/>
</dbReference>
<dbReference type="GeneTree" id="ENSGT00940000153759"/>
<dbReference type="HOGENOM" id="CLU_015515_1_0_1"/>
<dbReference type="InParanoid" id="P41250"/>
<dbReference type="OMA" id="MEMQYFV"/>
<dbReference type="OrthoDB" id="57698at2759"/>
<dbReference type="PAN-GO" id="P41250">
    <property type="GO annotations" value="4 GO annotations based on evolutionary models"/>
</dbReference>
<dbReference type="PhylomeDB" id="P41250"/>
<dbReference type="TreeFam" id="TF343504"/>
<dbReference type="BRENDA" id="6.1.1.14">
    <property type="organism ID" value="2681"/>
</dbReference>
<dbReference type="PathwayCommons" id="P41250"/>
<dbReference type="Reactome" id="R-HSA-379716">
    <property type="pathway name" value="Cytosolic tRNA aminoacylation"/>
</dbReference>
<dbReference type="Reactome" id="R-HSA-379726">
    <property type="pathway name" value="Mitochondrial tRNA aminoacylation"/>
</dbReference>
<dbReference type="SABIO-RK" id="P41250"/>
<dbReference type="SignaLink" id="P41250"/>
<dbReference type="SIGNOR" id="P41250"/>
<dbReference type="BioGRID-ORCS" id="2617">
    <property type="hits" value="819 hits in 1174 CRISPR screens"/>
</dbReference>
<dbReference type="CD-CODE" id="91857CE7">
    <property type="entry name" value="Nucleolus"/>
</dbReference>
<dbReference type="ChiTaRS" id="GARS">
    <property type="organism name" value="human"/>
</dbReference>
<dbReference type="EvolutionaryTrace" id="P41250"/>
<dbReference type="GeneWiki" id="Glycine%E2%80%94tRNA_ligase"/>
<dbReference type="GenomeRNAi" id="2617"/>
<dbReference type="Pharos" id="P41250">
    <property type="development level" value="Tchem"/>
</dbReference>
<dbReference type="PRO" id="PR:P41250"/>
<dbReference type="Proteomes" id="UP000005640">
    <property type="component" value="Chromosome 7"/>
</dbReference>
<dbReference type="RNAct" id="P41250">
    <property type="molecule type" value="protein"/>
</dbReference>
<dbReference type="Bgee" id="ENSG00000106105">
    <property type="expression patterns" value="Expressed in secondary oocyte and 216 other cell types or tissues"/>
</dbReference>
<dbReference type="ExpressionAtlas" id="P41250">
    <property type="expression patterns" value="baseline and differential"/>
</dbReference>
<dbReference type="GO" id="GO:0030424">
    <property type="term" value="C:axon"/>
    <property type="evidence" value="ECO:0000314"/>
    <property type="project" value="UniProtKB"/>
</dbReference>
<dbReference type="GO" id="GO:0005737">
    <property type="term" value="C:cytoplasm"/>
    <property type="evidence" value="ECO:0000318"/>
    <property type="project" value="GO_Central"/>
</dbReference>
<dbReference type="GO" id="GO:0005829">
    <property type="term" value="C:cytosol"/>
    <property type="evidence" value="ECO:0000314"/>
    <property type="project" value="HPA"/>
</dbReference>
<dbReference type="GO" id="GO:0070062">
    <property type="term" value="C:extracellular exosome"/>
    <property type="evidence" value="ECO:0000250"/>
    <property type="project" value="UniProtKB"/>
</dbReference>
<dbReference type="GO" id="GO:0005759">
    <property type="term" value="C:mitochondrial matrix"/>
    <property type="evidence" value="ECO:0000304"/>
    <property type="project" value="Reactome"/>
</dbReference>
<dbReference type="GO" id="GO:0005739">
    <property type="term" value="C:mitochondrion"/>
    <property type="evidence" value="ECO:0006056"/>
    <property type="project" value="FlyBase"/>
</dbReference>
<dbReference type="GO" id="GO:0030141">
    <property type="term" value="C:secretory granule"/>
    <property type="evidence" value="ECO:0007669"/>
    <property type="project" value="Ensembl"/>
</dbReference>
<dbReference type="GO" id="GO:0005524">
    <property type="term" value="F:ATP binding"/>
    <property type="evidence" value="ECO:0007669"/>
    <property type="project" value="UniProtKB-KW"/>
</dbReference>
<dbReference type="GO" id="GO:0141192">
    <property type="term" value="F:ATP:ATP adenylyltransferase activity"/>
    <property type="evidence" value="ECO:0007669"/>
    <property type="project" value="RHEA"/>
</dbReference>
<dbReference type="GO" id="GO:0004081">
    <property type="term" value="F:bis(5'-nucleosyl)-tetraphosphatase (asymmetrical) activity"/>
    <property type="evidence" value="ECO:0000314"/>
    <property type="project" value="UniProtKB"/>
</dbReference>
<dbReference type="GO" id="GO:0004820">
    <property type="term" value="F:glycine-tRNA ligase activity"/>
    <property type="evidence" value="ECO:0000314"/>
    <property type="project" value="UniProtKB"/>
</dbReference>
<dbReference type="GO" id="GO:0042802">
    <property type="term" value="F:identical protein binding"/>
    <property type="evidence" value="ECO:0000353"/>
    <property type="project" value="IntAct"/>
</dbReference>
<dbReference type="GO" id="GO:0046983">
    <property type="term" value="F:protein dimerization activity"/>
    <property type="evidence" value="ECO:0000314"/>
    <property type="project" value="UniProtKB"/>
</dbReference>
<dbReference type="GO" id="GO:0015966">
    <property type="term" value="P:diadenosine tetraphosphate biosynthetic process"/>
    <property type="evidence" value="ECO:0000314"/>
    <property type="project" value="UniProtKB"/>
</dbReference>
<dbReference type="GO" id="GO:0070150">
    <property type="term" value="P:mitochondrial glycyl-tRNA aminoacylation"/>
    <property type="evidence" value="ECO:0000318"/>
    <property type="project" value="GO_Central"/>
</dbReference>
<dbReference type="GO" id="GO:0006418">
    <property type="term" value="P:tRNA aminoacylation for protein translation"/>
    <property type="evidence" value="ECO:0000315"/>
    <property type="project" value="UniProtKB"/>
</dbReference>
<dbReference type="CDD" id="cd00774">
    <property type="entry name" value="GlyRS-like_core"/>
    <property type="match status" value="1"/>
</dbReference>
<dbReference type="CDD" id="cd00858">
    <property type="entry name" value="GlyRS_anticodon"/>
    <property type="match status" value="1"/>
</dbReference>
<dbReference type="CDD" id="cd00935">
    <property type="entry name" value="GlyRS_RNA"/>
    <property type="match status" value="1"/>
</dbReference>
<dbReference type="FunFam" id="3.30.40.230:FF:000001">
    <property type="entry name" value="Glycine--tRNA ligase"/>
    <property type="match status" value="1"/>
</dbReference>
<dbReference type="FunFam" id="3.30.720.200:FF:000001">
    <property type="entry name" value="Glycine--tRNA ligase 2"/>
    <property type="match status" value="1"/>
</dbReference>
<dbReference type="FunFam" id="3.40.50.800:FF:000004">
    <property type="entry name" value="Glycine--tRNA ligase 2"/>
    <property type="match status" value="1"/>
</dbReference>
<dbReference type="FunFam" id="1.10.287.10:FF:000007">
    <property type="entry name" value="Glycyl-tRNA synthetase"/>
    <property type="match status" value="1"/>
</dbReference>
<dbReference type="FunFam" id="3.30.930.10:FF:000158">
    <property type="entry name" value="Glycyl-tRNA synthetase"/>
    <property type="match status" value="1"/>
</dbReference>
<dbReference type="FunFam" id="3.30.930.10:FF:000010">
    <property type="entry name" value="Glycyl-tRNA synthetase 1"/>
    <property type="match status" value="1"/>
</dbReference>
<dbReference type="Gene3D" id="3.30.40.230">
    <property type="match status" value="1"/>
</dbReference>
<dbReference type="Gene3D" id="3.30.720.200">
    <property type="match status" value="1"/>
</dbReference>
<dbReference type="Gene3D" id="3.40.50.800">
    <property type="entry name" value="Anticodon-binding domain"/>
    <property type="match status" value="1"/>
</dbReference>
<dbReference type="Gene3D" id="3.30.930.10">
    <property type="entry name" value="Bira Bifunctional Protein, Domain 2"/>
    <property type="match status" value="1"/>
</dbReference>
<dbReference type="Gene3D" id="1.10.287.10">
    <property type="entry name" value="S15/NS1, RNA-binding"/>
    <property type="match status" value="1"/>
</dbReference>
<dbReference type="InterPro" id="IPR002314">
    <property type="entry name" value="aa-tRNA-synt_IIb"/>
</dbReference>
<dbReference type="InterPro" id="IPR006195">
    <property type="entry name" value="aa-tRNA-synth_II"/>
</dbReference>
<dbReference type="InterPro" id="IPR045864">
    <property type="entry name" value="aa-tRNA-synth_II/BPL/LPL"/>
</dbReference>
<dbReference type="InterPro" id="IPR004154">
    <property type="entry name" value="Anticodon-bd"/>
</dbReference>
<dbReference type="InterPro" id="IPR036621">
    <property type="entry name" value="Anticodon-bd_dom_sf"/>
</dbReference>
<dbReference type="InterPro" id="IPR027031">
    <property type="entry name" value="Gly-tRNA_synthase/POLG2"/>
</dbReference>
<dbReference type="InterPro" id="IPR033731">
    <property type="entry name" value="GlyRS-like_core"/>
</dbReference>
<dbReference type="InterPro" id="IPR002315">
    <property type="entry name" value="tRNA-synt_gly"/>
</dbReference>
<dbReference type="InterPro" id="IPR009068">
    <property type="entry name" value="uS15_NS1_RNA-bd_sf"/>
</dbReference>
<dbReference type="InterPro" id="IPR000738">
    <property type="entry name" value="WHEP-TRS_dom"/>
</dbReference>
<dbReference type="NCBIfam" id="TIGR00389">
    <property type="entry name" value="glyS_dimeric"/>
    <property type="match status" value="1"/>
</dbReference>
<dbReference type="NCBIfam" id="NF003211">
    <property type="entry name" value="PRK04173.1"/>
    <property type="match status" value="1"/>
</dbReference>
<dbReference type="PANTHER" id="PTHR10745:SF0">
    <property type="entry name" value="GLYCINE--TRNA LIGASE"/>
    <property type="match status" value="1"/>
</dbReference>
<dbReference type="PANTHER" id="PTHR10745">
    <property type="entry name" value="GLYCYL-TRNA SYNTHETASE/DNA POLYMERASE SUBUNIT GAMMA-2"/>
    <property type="match status" value="1"/>
</dbReference>
<dbReference type="Pfam" id="PF03129">
    <property type="entry name" value="HGTP_anticodon"/>
    <property type="match status" value="1"/>
</dbReference>
<dbReference type="Pfam" id="PF00587">
    <property type="entry name" value="tRNA-synt_2b"/>
    <property type="match status" value="1"/>
</dbReference>
<dbReference type="Pfam" id="PF00458">
    <property type="entry name" value="WHEP-TRS"/>
    <property type="match status" value="1"/>
</dbReference>
<dbReference type="PRINTS" id="PR01043">
    <property type="entry name" value="TRNASYNTHGLY"/>
</dbReference>
<dbReference type="SMART" id="SM00991">
    <property type="entry name" value="WHEP-TRS"/>
    <property type="match status" value="1"/>
</dbReference>
<dbReference type="SUPFAM" id="SSF52954">
    <property type="entry name" value="Class II aaRS ABD-related"/>
    <property type="match status" value="1"/>
</dbReference>
<dbReference type="SUPFAM" id="SSF55681">
    <property type="entry name" value="Class II aaRS and biotin synthetases"/>
    <property type="match status" value="1"/>
</dbReference>
<dbReference type="SUPFAM" id="SSF47060">
    <property type="entry name" value="S15/NS1 RNA-binding domain"/>
    <property type="match status" value="1"/>
</dbReference>
<dbReference type="PROSITE" id="PS50862">
    <property type="entry name" value="AA_TRNA_LIGASE_II"/>
    <property type="match status" value="1"/>
</dbReference>
<dbReference type="PROSITE" id="PS00762">
    <property type="entry name" value="WHEP_TRS_1"/>
    <property type="match status" value="1"/>
</dbReference>
<dbReference type="PROSITE" id="PS51185">
    <property type="entry name" value="WHEP_TRS_2"/>
    <property type="match status" value="1"/>
</dbReference>
<comment type="function">
    <text evidence="10 13 18 25">Catalyzes the ATP-dependent ligation of glycine to the 3'-end of its cognate tRNA, via the formation of an aminoacyl-adenylate intermediate (Gly-AMP) (PubMed:17544401, PubMed:24898252, PubMed:28675565). Also produces diadenosine tetraphosphate (Ap4A), a universal pleiotropic signaling molecule needed for cell regulation pathways, by direct condensation of 2 ATPs. Thereby, may play a special role in Ap4A homeostasis (PubMed:19710017).</text>
</comment>
<comment type="catalytic activity">
    <reaction evidence="10 18 25">
        <text>tRNA(Gly) + glycine + ATP = glycyl-tRNA(Gly) + AMP + diphosphate</text>
        <dbReference type="Rhea" id="RHEA:16013"/>
        <dbReference type="Rhea" id="RHEA-COMP:9664"/>
        <dbReference type="Rhea" id="RHEA-COMP:9683"/>
        <dbReference type="ChEBI" id="CHEBI:30616"/>
        <dbReference type="ChEBI" id="CHEBI:33019"/>
        <dbReference type="ChEBI" id="CHEBI:57305"/>
        <dbReference type="ChEBI" id="CHEBI:78442"/>
        <dbReference type="ChEBI" id="CHEBI:78522"/>
        <dbReference type="ChEBI" id="CHEBI:456215"/>
        <dbReference type="EC" id="6.1.1.14"/>
    </reaction>
    <physiologicalReaction direction="left-to-right" evidence="34">
        <dbReference type="Rhea" id="RHEA:16014"/>
    </physiologicalReaction>
</comment>
<comment type="catalytic activity">
    <reaction evidence="13">
        <text>2 ATP + H(+) = P(1),P(4)-bis(5'-adenosyl) tetraphosphate + diphosphate</text>
        <dbReference type="Rhea" id="RHEA:34935"/>
        <dbReference type="ChEBI" id="CHEBI:15378"/>
        <dbReference type="ChEBI" id="CHEBI:30616"/>
        <dbReference type="ChEBI" id="CHEBI:33019"/>
        <dbReference type="ChEBI" id="CHEBI:58141"/>
    </reaction>
    <physiologicalReaction direction="left-to-right" evidence="33">
        <dbReference type="Rhea" id="RHEA:34936"/>
    </physiologicalReaction>
</comment>
<comment type="activity regulation">
    <text evidence="13">Ap4A synthesis is inhibited by tRNA, via the disruption of the second ATP-binding site by direct blocking and/or by tRNA-induced conformational change.</text>
</comment>
<comment type="biophysicochemical properties">
    <kinetics>
        <KM evidence="10">1.3 uM for tRNA(Gly(GCC))</KM>
        <KM evidence="10">15 uM for glycine</KM>
        <KM evidence="25">0.74 uM for tRNA(Gly)</KM>
        <text evidence="25">kcat is 0.049 sec(-1) for aminoacylation of tRNA(Gly).</text>
    </kinetics>
</comment>
<comment type="subunit">
    <text evidence="10 11 33 34">Homodimer.</text>
</comment>
<comment type="interaction">
    <interactant intactId="EBI-724143">
        <id>P41250</id>
    </interactant>
    <interactant intactId="EBI-749503">
        <id>Q16520</id>
        <label>BATF</label>
    </interactant>
    <organismsDiffer>false</organismsDiffer>
    <experiments>3</experiments>
</comment>
<comment type="interaction">
    <interactant intactId="EBI-724143">
        <id>P41250</id>
    </interactant>
    <interactant intactId="EBI-350590">
        <id>Q9UNS2</id>
        <label>COPS3</label>
    </interactant>
    <organismsDiffer>false</organismsDiffer>
    <experiments>3</experiments>
</comment>
<comment type="interaction">
    <interactant intactId="EBI-724143">
        <id>P41250</id>
    </interactant>
    <interactant intactId="EBI-724143">
        <id>P41250</id>
        <label>GARS1</label>
    </interactant>
    <organismsDiffer>false</organismsDiffer>
    <experiments>4</experiments>
</comment>
<comment type="interaction">
    <interactant intactId="EBI-724143">
        <id>P41250</id>
    </interactant>
    <interactant intactId="EBI-714994">
        <id>Q99612</id>
        <label>KLF6</label>
    </interactant>
    <organismsDiffer>false</organismsDiffer>
    <experiments>3</experiments>
</comment>
<comment type="interaction">
    <interactant intactId="EBI-724143">
        <id>P41250</id>
    </interactant>
    <interactant intactId="EBI-22012354">
        <id>Q9BR81</id>
        <label>PCDHGC3</label>
    </interactant>
    <organismsDiffer>false</organismsDiffer>
    <experiments>3</experiments>
</comment>
<comment type="interaction">
    <interactant intactId="EBI-724143">
        <id>P41250</id>
    </interactant>
    <interactant intactId="EBI-3942425">
        <id>Q8WXH5</id>
        <label>SOCS4</label>
    </interactant>
    <organismsDiffer>false</organismsDiffer>
    <experiments>3</experiments>
</comment>
<comment type="interaction">
    <interactant intactId="EBI-724143">
        <id>P41250</id>
    </interactant>
    <interactant intactId="EBI-11959123">
        <id>Q99932-2</id>
        <label>SPAG8</label>
    </interactant>
    <organismsDiffer>false</organismsDiffer>
    <experiments>3</experiments>
</comment>
<comment type="interaction">
    <interactant intactId="EBI-724143">
        <id>P41250</id>
    </interactant>
    <interactant intactId="EBI-8321941">
        <id>Q9CZD3</id>
        <label>Gars1</label>
    </interactant>
    <organismsDiffer>true</organismsDiffer>
    <experiments>2</experiments>
</comment>
<comment type="subcellular location">
    <subcellularLocation>
        <location evidence="7">Cytoplasm</location>
    </subcellularLocation>
    <subcellularLocation>
        <location evidence="7">Cell projection</location>
        <location evidence="7">Axon</location>
    </subcellularLocation>
    <subcellularLocation>
        <location evidence="1">Secreted</location>
    </subcellularLocation>
    <subcellularLocation>
        <location evidence="1">Secreted</location>
        <location evidence="1">Extracellular exosome</location>
    </subcellularLocation>
    <text evidence="1 7">In transfected COS7 cells, not detected in mitochondria, nor in Golgi apparatus (PubMed:17035524). Secreted by motor neuron, possibly through the exosome pathway (By similarity).</text>
</comment>
<comment type="subcellular location">
    <molecule>Isoform 1</molecule>
    <subcellularLocation>
        <location evidence="9 21">Mitochondrion</location>
    </subcellularLocation>
    <subcellularLocation>
        <location evidence="21">Cytoplasm</location>
    </subcellularLocation>
</comment>
<comment type="subcellular location">
    <molecule>Isoform 2</molecule>
    <subcellularLocation>
        <location evidence="9 21">Cytoplasm</location>
    </subcellularLocation>
    <subcellularLocation>
        <location evidence="19">Cell projection</location>
        <location evidence="19">Axon</location>
    </subcellularLocation>
</comment>
<comment type="alternative products">
    <event type="alternative initiation"/>
    <isoform>
        <id>P41250-1</id>
        <name evidence="32">1</name>
        <sequence type="displayed"/>
    </isoform>
    <isoform>
        <id>P41250-2</id>
        <name evidence="32">2</name>
        <sequence type="described" ref="VSP_060970"/>
    </isoform>
</comment>
<comment type="tissue specificity">
    <text evidence="4">Widely expressed, including in brain and spinal cord.</text>
</comment>
<comment type="tissue specificity">
    <molecule>Isoform 2</molecule>
    <text evidence="21">Expressed in brain, spinal cord, muscle, heart and spleen.</text>
</comment>
<comment type="tissue specificity">
    <molecule>Isoform 1</molecule>
    <text evidence="21">Expressed in brain, spinal cord, muscle, heart, spleen and liver.</text>
</comment>
<comment type="disease" evidence="4 7 8 12 14 16 19 20 22 26">
    <disease id="DI-00278">
        <name>Charcot-Marie-Tooth disease, axonal, type 2D</name>
        <acronym>CMT2D</acronym>
        <description>A dominant axonal form of Charcot-Marie-Tooth disease, a disorder of the peripheral nervous system, characterized by progressive weakness and atrophy, initially of the peroneal muscles and later of the distal muscles of the arms. Charcot-Marie-Tooth disease is classified in two main groups on the basis of electrophysiologic properties and histopathology: primary peripheral demyelinating neuropathies (designated CMT1 when they are dominantly inherited) and primary peripheral axonal neuropathies (CMT2). Neuropathies of the CMT2 group are characterized by signs of axonal degeneration in the absence of obvious myelin alterations, normal or slightly reduced nerve conduction velocities, and progressive distal muscle weakness and atrophy.</description>
        <dbReference type="MIM" id="601472"/>
    </disease>
    <text>The disease is caused by variants affecting the gene represented in this entry.</text>
</comment>
<comment type="disease" evidence="4 7 15 17 22">
    <disease id="DI-00402">
        <name>Neuronopathy, distal hereditary motor, autosomal dominant 5</name>
        <acronym>HMND5</acronym>
        <description>A form of distal hereditary motor neuronopathy, a heterogeneous group of neuromuscular disorders caused by selective degeneration of motor neurons in the anterior horn of the spinal cord, without sensory deficit in the posterior horn. The overall clinical picture consists of a classical distal muscular atrophy syndrome in the legs without clinical sensory loss. The disease starts with weakness and wasting of distal muscles of the anterior tibial and peroneal compartments of the legs. Later on, weakness and atrophy may expand to the proximal muscles of the lower limbs and/or to the distal upper limbs.</description>
        <dbReference type="MIM" id="600794"/>
    </disease>
    <text>The disease is caused by variants affecting the gene represented in this entry.</text>
</comment>
<comment type="disease" evidence="27">
    <disease id="DI-05926">
        <name>Spinal muscular atrophy, infantile, James type</name>
        <acronym>SMAJI</acronym>
        <description>An autosomal dominant form of spinal muscular atrophy, a group of neuromuscular disorders characterized by degeneration of the anterior horn cells of the spinal cord, leading to symmetrical muscle weakness and atrophy. SMAJI is a severe disease characterized by hypotonia manifesting in the first weeks or months of life, delayed motor development, motor regression, and muscle weakness and atrophy primarily affecting distal muscles. Additional variable features include feeding difficulties, poor overall growth, foot deformities, kyphosis, hyperlordosis, scoliosis, vocal cord dysfunction, and respiratory insufficiency.</description>
        <dbReference type="MIM" id="619042"/>
    </disease>
    <text>The disease is caused by variants affecting the gene represented in this entry.</text>
</comment>
<comment type="miscellaneous">
    <text evidence="13">Human GlyRS uses direct ATP condensation to synthesize Ap4A, a unique amino acid-independent mechanism, in contrast to the classical amino acid-dependent mechanism for synthesis of Ap4A by a tRNA synthetase, that involves the generation of an enzyme-bound aminoacyl-AMP which is then attacked by ATP to form Ap4A.</text>
</comment>
<comment type="miscellaneous">
    <molecule>Isoform 2</molecule>
    <text evidence="35">The isoform 2 translation is regulated by an Internal Ribosome Entry Site (IRES) and an upstream Open Reading Frame. Both are important in hindering the synthesis of the mitochondrial GARS and target the translation of the cytosolic enzyme to ER-bound ribosomes.</text>
</comment>
<comment type="similarity">
    <text evidence="32">Belongs to the class-II aminoacyl-tRNA synthetase family.</text>
</comment>
<comment type="sequence caution" evidence="32">
    <conflict type="erroneous initiation">
        <sequence resource="EMBL-CDS" id="AAA57001"/>
    </conflict>
    <text>Truncated N-terminus.</text>
</comment>
<comment type="sequence caution" evidence="32">
    <conflict type="erroneous initiation">
        <sequence resource="EMBL-CDS" id="AAA86443"/>
    </conflict>
    <text>Truncated N-terminus.</text>
</comment>
<comment type="online information" name="Inherited peripheral neuropathies mutation db">
    <link uri="https://uantwerpen.vib.be/CMTMutations"/>
</comment>
<organism>
    <name type="scientific">Homo sapiens</name>
    <name type="common">Human</name>
    <dbReference type="NCBI Taxonomy" id="9606"/>
    <lineage>
        <taxon>Eukaryota</taxon>
        <taxon>Metazoa</taxon>
        <taxon>Chordata</taxon>
        <taxon>Craniata</taxon>
        <taxon>Vertebrata</taxon>
        <taxon>Euteleostomi</taxon>
        <taxon>Mammalia</taxon>
        <taxon>Eutheria</taxon>
        <taxon>Euarchontoglires</taxon>
        <taxon>Primates</taxon>
        <taxon>Haplorrhini</taxon>
        <taxon>Catarrhini</taxon>
        <taxon>Hominidae</taxon>
        <taxon>Homo</taxon>
    </lineage>
</organism>
<feature type="transit peptide" description="Mitochondrion" evidence="2">
    <location>
        <begin position="1"/>
        <end position="36"/>
    </location>
</feature>
<feature type="chain" id="PRO_0000072998" description="Glycine--tRNA ligase" evidence="2">
    <location>
        <begin position="37"/>
        <end position="739"/>
    </location>
</feature>
<feature type="domain" description="WHEP-TRS" evidence="3">
    <location>
        <begin position="63"/>
        <end position="119"/>
    </location>
</feature>
<feature type="binding site" evidence="13 18 36 41 46">
    <location>
        <position position="299"/>
    </location>
    <ligand>
        <name>glycine</name>
        <dbReference type="ChEBI" id="CHEBI:57305"/>
    </ligand>
</feature>
<feature type="binding site" evidence="13 34 36 41">
    <location>
        <begin position="331"/>
        <end position="333"/>
    </location>
    <ligand>
        <name>ATP</name>
        <dbReference type="ChEBI" id="CHEBI:30616"/>
    </ligand>
</feature>
<feature type="binding site" evidence="13 41">
    <location>
        <begin position="342"/>
        <end position="343"/>
    </location>
    <ligand>
        <name>ATP</name>
        <dbReference type="ChEBI" id="CHEBI:30616"/>
    </ligand>
</feature>
<feature type="binding site" evidence="13 18 36 41 46">
    <location>
        <position position="350"/>
    </location>
    <ligand>
        <name>glycine</name>
        <dbReference type="ChEBI" id="CHEBI:57305"/>
    </ligand>
</feature>
<feature type="binding site" evidence="13 34 36 41">
    <location>
        <begin position="457"/>
        <end position="458"/>
    </location>
    <ligand>
        <name>ATP</name>
        <dbReference type="ChEBI" id="CHEBI:30616"/>
    </ligand>
</feature>
<feature type="binding site" evidence="13 18 41 46">
    <location>
        <begin position="576"/>
        <end position="578"/>
    </location>
    <ligand>
        <name>glycine</name>
        <dbReference type="ChEBI" id="CHEBI:57305"/>
    </ligand>
</feature>
<feature type="binding site" evidence="13 41">
    <location>
        <position position="583"/>
    </location>
    <ligand>
        <name>ATP</name>
        <dbReference type="ChEBI" id="CHEBI:30616"/>
    </ligand>
</feature>
<feature type="modified residue" description="Phosphoserine" evidence="50">
    <location>
        <position position="35"/>
    </location>
</feature>
<feature type="modified residue" description="N6-acetyllysine" evidence="49">
    <location>
        <position position="204"/>
    </location>
</feature>
<feature type="modified residue" description="Phosphotyrosine" evidence="1">
    <location>
        <position position="453"/>
    </location>
</feature>
<feature type="modified residue" description="N6-acetyllysine" evidence="49">
    <location>
        <position position="501"/>
    </location>
</feature>
<feature type="modified residue" description="Phosphoserine" evidence="1">
    <location>
        <position position="700"/>
    </location>
</feature>
<feature type="modified residue" description="Phosphothreonine" evidence="50">
    <location>
        <position position="736"/>
    </location>
</feature>
<feature type="splice variant" id="VSP_060970" description="In isoform 2." evidence="37">
    <location>
        <begin position="1"/>
        <end position="54"/>
    </location>
</feature>
<feature type="sequence variant" id="VAR_054865" description="In dbSNP:rs1049402." evidence="5 6 28 29 30 50">
    <original>P</original>
    <variation>A</variation>
    <location>
        <position position="42"/>
    </location>
</feature>
<feature type="sequence variant" id="VAR_073187" description="In CMT2D; shows a reduction in aminoacylation activity; dbSNP:rs370531212." evidence="12 19">
    <original>A</original>
    <variation>V</variation>
    <location>
        <position position="111"/>
    </location>
</feature>
<feature type="sequence variant" id="VAR_018718" description="In CMT2D; phenotype overlapping with HMND5; complements the defect of the wild-type gene in yeast; contrary to the wild-type protein, strongly binds to NRP1 and competes with VEGFA for NRP1-binding; displays slightly elevated aminoacylation activity over wild-type; dbSNP:rs137852645." evidence="4 7 18 19 22">
    <original>E</original>
    <variation>G</variation>
    <location>
        <position position="125"/>
    </location>
</feature>
<feature type="sequence variant" id="VAR_018719" description="In HMND5; does not complement the defect of the wild-type gene in yeast; contrary to the wild-type protein, strongly interacts with NRP1; dbSNP:rs137852644." evidence="4 7 19 22">
    <original>L</original>
    <variation>P</variation>
    <location>
        <position position="183"/>
    </location>
</feature>
<feature type="sequence variant" id="VAR_073188" description="In CMT2D and HMND5; shows a large reduction in aminoacylation activity; dbSNP:rs1554337369." evidence="15 19">
    <original>D</original>
    <variation>N</variation>
    <location>
        <position position="200"/>
    </location>
</feature>
<feature type="sequence variant" id="VAR_074016" description="In CMT2D; dbSNP:rs1554337369." evidence="20">
    <original>D</original>
    <variation>Y</variation>
    <location>
        <position position="200"/>
    </location>
</feature>
<feature type="sequence variant" id="VAR_073189" description="In CMT2D and HMND5; shows a large reduction in aminoacylation activity; demonstrates a change in the subcellular location pattern; does not associate with granules; dbSNP:rs1554337974." evidence="15 19">
    <original>S</original>
    <variation>F</variation>
    <location>
        <position position="265"/>
    </location>
</feature>
<feature type="sequence variant" id="VAR_085141" description="In CMT2D; uncertain significance; dbSNP:rs1554337974." evidence="26">
    <original>S</original>
    <variation>Y</variation>
    <location>
        <position position="265"/>
    </location>
</feature>
<feature type="sequence variant" id="VAR_054866" description="Found in a patient with mild left ventricular posterior wall hypertrophy, exercise intolerance and lactic acidosis; uncertain significance; dbSNP:rs2230310." evidence="24">
    <original>T</original>
    <variation>I</variation>
    <location>
        <position position="268"/>
    </location>
</feature>
<feature type="sequence variant" id="VAR_074017" description="In CMT2D; dbSNP:rs1064795123." evidence="20">
    <original>M</original>
    <variation>R</variation>
    <location>
        <position position="292"/>
    </location>
</feature>
<feature type="sequence variant" id="VAR_018720" description="In CMT2D; shows a large reduction in aminoacylation activity; does not impair transcription or translation or protein stability; contrary to the wild-type protein, strongly interacts with NRP1; dbSNP:rs137852643." evidence="4 7 19 22">
    <original>G</original>
    <variation>R</variation>
    <location>
        <position position="294"/>
    </location>
</feature>
<feature type="sequence variant" id="VAR_073190" description="In CMT2D; shows a large reduction in aminoacylation activity; demonstrates a change in subcellular location pattern; does not associate with granules; dbSNP:rs137852648." evidence="14 19">
    <original>P</original>
    <variation>L</variation>
    <location>
        <position position="298"/>
    </location>
</feature>
<feature type="sequence variant" id="VAR_079827" description="Found in a patient with growth retardation, microcephaly, thinning of the corpus callosum, decreased white matter and brain stem involvement, as well as large calvaria, cerebellar vermis atrophy, dysmorphic features, prominent epicanthal folds, hypotelorism, high-arched palate, delayed motor milestones, apnea and sparse thin scalp hair; likely pathogenic; reduces to less than 1% aminoacylation activity; dbSNP:rs1135401748." evidence="25">
    <original>R</original>
    <variation>Q</variation>
    <location>
        <position position="310"/>
    </location>
</feature>
<feature type="sequence variant" id="VAR_073191" description="In CMT2D; uncertain significance; shows a large reduction in aminoacylation activity; demonstrates a change in subcellular location pattern; does not associate with granules; dbSNP:rs1554338260." evidence="8 16 19">
    <original>I</original>
    <variation>F</variation>
    <location>
        <position position="334"/>
    </location>
</feature>
<feature type="sequence variant" id="VAR_085142" description="In SMAJI; loss of function; based on yeast complementation assay; dbSNP:rs1554338262." evidence="27">
    <original>I</original>
    <variation>N</variation>
    <location>
        <position position="334"/>
    </location>
</feature>
<feature type="sequence variant" id="VAR_054867" description="In dbSNP:rs17159287.">
    <original>R</original>
    <variation>Q</variation>
    <location>
        <position position="388"/>
    </location>
</feature>
<feature type="sequence variant" id="VAR_079828" description="Found in a patient with mild left ventricular posterior wall hypertrophy, exercise intolerance and lactic acidosis; uncertain significance; dbSNP:rs770924455." evidence="24">
    <original>R</original>
    <variation>C</variation>
    <location>
        <position position="412"/>
    </location>
</feature>
<feature type="sequence variant" id="VAR_073192" description="In HMND5; shows a large reduction in aminoacylation activity; does not complement the defect of the wild-type gene in yeast; dbSNP:rs1060502838." evidence="7 17 19">
    <original>H</original>
    <variation>R</variation>
    <location>
        <position position="472"/>
    </location>
</feature>
<feature type="sequence variant" id="VAR_073193" description="In CMT2D; demonstrates no change in subcellular location pattern; dbSNP:rs137852647." evidence="19">
    <original>D</original>
    <variation>N</variation>
    <location>
        <position position="554"/>
    </location>
</feature>
<feature type="sequence variant" id="VAR_018721" description="In HMND5; higher dimerization stability; loss of activity; shows a large reduction in aminoacylation activity; dbSNP:rs137852646." evidence="4 7 11 19">
    <original>G</original>
    <variation>R</variation>
    <location>
        <position position="580"/>
    </location>
</feature>
<feature type="sequence variant" id="VAR_079829" description="In HMND5; uncertain significance; dbSNP:rs766280100." evidence="8">
    <original>G</original>
    <variation>A</variation>
    <location>
        <position position="598"/>
    </location>
</feature>
<feature type="sequence variant" id="VAR_073194" description="Has no effect on subcellular localization; results in decreased affinity for glycine; dbSNP:rs201358272." evidence="8 10 19">
    <original>S</original>
    <variation>L</variation>
    <location>
        <position position="635"/>
    </location>
</feature>
<feature type="sequence variant" id="VAR_073195" description="In CMT2D; shows a large reduction in aminoacylation activity; demonstrates a change in subcellular location pattern; does not associate with granules; dbSNP:rs747080824." evidence="8 19">
    <original>G</original>
    <variation>A</variation>
    <location>
        <position position="652"/>
    </location>
</feature>
<feature type="sequence variant" id="VAR_085143" description="In SMAJI; dbSNP:rs1783251037." evidence="27">
    <original>G</original>
    <variation>R</variation>
    <location>
        <position position="652"/>
    </location>
</feature>
<feature type="mutagenesis site" description="Decrease in catalytic activity by about 10-fold." evidence="18">
    <original>R</original>
    <variation>A</variation>
    <location>
        <position position="121"/>
    </location>
</feature>
<feature type="mutagenesis site" description="Displays 62% of wild-type catalytic activity. Displays 20% of wild-type catalytic activity; when associated with G-125." evidence="23">
    <original>C</original>
    <variation>R</variation>
    <location>
        <position position="211"/>
    </location>
</feature>
<feature type="mutagenesis site" description="Decrease in catalytic activity by more than 10-fold." evidence="18">
    <original>R</original>
    <variation>A</variation>
    <location>
        <position position="337"/>
    </location>
</feature>
<feature type="mutagenesis site" description="Loss of catalytic activity." evidence="23">
    <location>
        <begin position="486"/>
        <end position="490"/>
    </location>
</feature>
<feature type="mutagenesis site" description="Decrease in catalytic activity by more than 10-fold." evidence="18">
    <original>R</original>
    <variation>A</variation>
    <location>
        <position position="602"/>
    </location>
</feature>
<feature type="mutagenesis site" description="Decrease in catalytic activity by more than 10-fold." evidence="18">
    <original>Y</original>
    <variation>F</variation>
    <location>
        <position position="658"/>
    </location>
</feature>
<feature type="mutagenesis site" description="Decrease in catalytic activity by about 10-fold." evidence="18">
    <original>Q</original>
    <variation>A</variation>
    <variation>N</variation>
    <location>
        <position position="729"/>
    </location>
</feature>
<feature type="sequence conflict" description="In Ref. 3; BAG58412." evidence="32" ref="3">
    <location>
        <begin position="9"/>
        <end position="18"/>
    </location>
</feature>
<feature type="sequence conflict" description="In Ref. 3; BAG51964." evidence="32" ref="3">
    <original>D</original>
    <variation>G</variation>
    <location>
        <position position="205"/>
    </location>
</feature>
<feature type="sequence conflict" description="In Ref. 2; AAA86443." evidence="32" ref="2">
    <original>M</original>
    <variation>I</variation>
    <location>
        <position position="530"/>
    </location>
</feature>
<feature type="sequence conflict" description="In Ref. 3; BAG51964." evidence="32" ref="3">
    <original>L</original>
    <variation>S</variation>
    <location>
        <position position="634"/>
    </location>
</feature>
<feature type="turn" evidence="58">
    <location>
        <begin position="62"/>
        <end position="64"/>
    </location>
</feature>
<feature type="helix" evidence="58">
    <location>
        <begin position="65"/>
        <end position="80"/>
    </location>
</feature>
<feature type="turn" evidence="58">
    <location>
        <begin position="81"/>
        <end position="83"/>
    </location>
</feature>
<feature type="helix" evidence="58">
    <location>
        <begin position="95"/>
        <end position="112"/>
    </location>
</feature>
<feature type="helix" evidence="54">
    <location>
        <begin position="121"/>
        <end position="130"/>
    </location>
</feature>
<feature type="strand" evidence="54">
    <location>
        <begin position="133"/>
        <end position="136"/>
    </location>
</feature>
<feature type="helix" evidence="54">
    <location>
        <begin position="139"/>
        <end position="141"/>
    </location>
</feature>
<feature type="strand" evidence="54">
    <location>
        <begin position="148"/>
        <end position="150"/>
    </location>
</feature>
<feature type="helix" evidence="54">
    <location>
        <begin position="152"/>
        <end position="168"/>
    </location>
</feature>
<feature type="helix" evidence="54">
    <location>
        <begin position="170"/>
        <end position="173"/>
    </location>
</feature>
<feature type="strand" evidence="54">
    <location>
        <begin position="182"/>
        <end position="185"/>
    </location>
</feature>
<feature type="helix" evidence="54">
    <location>
        <begin position="186"/>
        <end position="191"/>
    </location>
</feature>
<feature type="helix" evidence="54">
    <location>
        <begin position="194"/>
        <end position="197"/>
    </location>
</feature>
<feature type="strand" evidence="54">
    <location>
        <begin position="199"/>
        <end position="208"/>
    </location>
</feature>
<feature type="strand" evidence="54">
    <location>
        <begin position="211"/>
        <end position="213"/>
    </location>
</feature>
<feature type="helix" evidence="54">
    <location>
        <begin position="214"/>
        <end position="227"/>
    </location>
</feature>
<feature type="strand" evidence="53">
    <location>
        <begin position="229"/>
        <end position="231"/>
    </location>
</feature>
<feature type="helix" evidence="54">
    <location>
        <begin position="233"/>
        <end position="243"/>
    </location>
</feature>
<feature type="turn" evidence="54">
    <location>
        <begin position="244"/>
        <end position="248"/>
    </location>
</feature>
<feature type="helix" evidence="54">
    <location>
        <begin position="251"/>
        <end position="260"/>
    </location>
</feature>
<feature type="strand" evidence="54">
    <location>
        <begin position="266"/>
        <end position="268"/>
    </location>
</feature>
<feature type="strand" evidence="54">
    <location>
        <begin position="276"/>
        <end position="279"/>
    </location>
</feature>
<feature type="strand" evidence="54">
    <location>
        <begin position="283"/>
        <end position="285"/>
    </location>
</feature>
<feature type="strand" evidence="54">
    <location>
        <begin position="287"/>
        <end position="296"/>
    </location>
</feature>
<feature type="strand" evidence="55">
    <location>
        <begin position="298"/>
        <end position="300"/>
    </location>
</feature>
<feature type="helix" evidence="54">
    <location>
        <begin position="301"/>
        <end position="305"/>
    </location>
</feature>
<feature type="helix" evidence="54">
    <location>
        <begin position="308"/>
        <end position="314"/>
    </location>
</feature>
<feature type="turn" evidence="54">
    <location>
        <begin position="315"/>
        <end position="317"/>
    </location>
</feature>
<feature type="strand" evidence="54">
    <location>
        <begin position="321"/>
        <end position="330"/>
    </location>
</feature>
<feature type="helix" evidence="54">
    <location>
        <begin position="339"/>
        <end position="341"/>
    </location>
</feature>
<feature type="strand" evidence="54">
    <location>
        <begin position="344"/>
        <end position="355"/>
    </location>
</feature>
<feature type="helix" evidence="56">
    <location>
        <begin position="357"/>
        <end position="359"/>
    </location>
</feature>
<feature type="helix" evidence="54">
    <location>
        <begin position="365"/>
        <end position="367"/>
    </location>
</feature>
<feature type="turn" evidence="54">
    <location>
        <begin position="368"/>
        <end position="370"/>
    </location>
</feature>
<feature type="strand" evidence="54">
    <location>
        <begin position="372"/>
        <end position="376"/>
    </location>
</feature>
<feature type="helix" evidence="54">
    <location>
        <begin position="378"/>
        <end position="382"/>
    </location>
</feature>
<feature type="strand" evidence="54">
    <location>
        <begin position="388"/>
        <end position="391"/>
    </location>
</feature>
<feature type="helix" evidence="54">
    <location>
        <begin position="392"/>
        <end position="397"/>
    </location>
</feature>
<feature type="strand" evidence="51">
    <location>
        <begin position="400"/>
        <end position="402"/>
    </location>
</feature>
<feature type="helix" evidence="54">
    <location>
        <begin position="404"/>
        <end position="420"/>
    </location>
</feature>
<feature type="helix" evidence="54">
    <location>
        <begin position="424"/>
        <end position="426"/>
    </location>
</feature>
<feature type="strand" evidence="54">
    <location>
        <begin position="427"/>
        <end position="431"/>
    </location>
</feature>
<feature type="helix" evidence="54">
    <location>
        <begin position="434"/>
        <end position="436"/>
    </location>
</feature>
<feature type="strand" evidence="54">
    <location>
        <begin position="442"/>
        <end position="451"/>
    </location>
</feature>
<feature type="strand" evidence="54">
    <location>
        <begin position="454"/>
        <end position="462"/>
    </location>
</feature>
<feature type="helix" evidence="54">
    <location>
        <begin position="467"/>
        <end position="476"/>
    </location>
</feature>
<feature type="strand" evidence="54">
    <location>
        <begin position="482"/>
        <end position="484"/>
    </location>
</feature>
<feature type="helix" evidence="56">
    <location>
        <begin position="501"/>
        <end position="507"/>
    </location>
</feature>
<feature type="helix" evidence="56">
    <location>
        <begin position="512"/>
        <end position="519"/>
    </location>
</feature>
<feature type="helix" evidence="56">
    <location>
        <begin position="524"/>
        <end position="535"/>
    </location>
</feature>
<feature type="strand" evidence="56">
    <location>
        <begin position="541"/>
        <end position="544"/>
    </location>
</feature>
<feature type="strand" evidence="56">
    <location>
        <begin position="547"/>
        <end position="550"/>
    </location>
</feature>
<feature type="strand" evidence="56">
    <location>
        <begin position="552"/>
        <end position="554"/>
    </location>
</feature>
<feature type="strand" evidence="52">
    <location>
        <begin position="562"/>
        <end position="564"/>
    </location>
</feature>
<feature type="turn" evidence="52">
    <location>
        <begin position="565"/>
        <end position="567"/>
    </location>
</feature>
<feature type="strand" evidence="54">
    <location>
        <begin position="568"/>
        <end position="570"/>
    </location>
</feature>
<feature type="strand" evidence="54">
    <location>
        <begin position="573"/>
        <end position="580"/>
    </location>
</feature>
<feature type="helix" evidence="54">
    <location>
        <begin position="581"/>
        <end position="592"/>
    </location>
</feature>
<feature type="strand" evidence="54">
    <location>
        <begin position="593"/>
        <end position="595"/>
    </location>
</feature>
<feature type="strand" evidence="56">
    <location>
        <begin position="597"/>
        <end position="600"/>
    </location>
</feature>
<feature type="strand" evidence="54">
    <location>
        <begin position="603"/>
        <end position="605"/>
    </location>
</feature>
<feature type="turn" evidence="54">
    <location>
        <begin position="609"/>
        <end position="611"/>
    </location>
</feature>
<feature type="strand" evidence="54">
    <location>
        <begin position="615"/>
        <end position="621"/>
    </location>
</feature>
<feature type="turn" evidence="54">
    <location>
        <begin position="625"/>
        <end position="627"/>
    </location>
</feature>
<feature type="helix" evidence="54">
    <location>
        <begin position="628"/>
        <end position="640"/>
    </location>
</feature>
<feature type="strand" evidence="54">
    <location>
        <begin position="645"/>
        <end position="647"/>
    </location>
</feature>
<feature type="strand" evidence="58">
    <location>
        <begin position="650"/>
        <end position="652"/>
    </location>
</feature>
<feature type="helix" evidence="54">
    <location>
        <begin position="654"/>
        <end position="663"/>
    </location>
</feature>
<feature type="strand" evidence="54">
    <location>
        <begin position="668"/>
        <end position="672"/>
    </location>
</feature>
<feature type="helix" evidence="54">
    <location>
        <begin position="674"/>
        <end position="677"/>
    </location>
</feature>
<feature type="strand" evidence="54">
    <location>
        <begin position="679"/>
        <end position="681"/>
    </location>
</feature>
<feature type="strand" evidence="54">
    <location>
        <begin position="683"/>
        <end position="688"/>
    </location>
</feature>
<feature type="turn" evidence="54">
    <location>
        <begin position="689"/>
        <end position="691"/>
    </location>
</feature>
<feature type="strand" evidence="54">
    <location>
        <begin position="694"/>
        <end position="698"/>
    </location>
</feature>
<feature type="turn" evidence="54">
    <location>
        <begin position="699"/>
        <end position="701"/>
    </location>
</feature>
<feature type="helix" evidence="54">
    <location>
        <begin position="702"/>
        <end position="710"/>
    </location>
</feature>
<feature type="strand" evidence="57">
    <location>
        <begin position="712"/>
        <end position="714"/>
    </location>
</feature>
<feature type="helix" evidence="54">
    <location>
        <begin position="716"/>
        <end position="722"/>
    </location>
</feature>
<evidence type="ECO:0000250" key="1">
    <source>
        <dbReference type="UniProtKB" id="Q9CZD3"/>
    </source>
</evidence>
<evidence type="ECO:0000255" key="2"/>
<evidence type="ECO:0000255" key="3">
    <source>
        <dbReference type="PROSITE-ProRule" id="PRU00531"/>
    </source>
</evidence>
<evidence type="ECO:0000269" key="4">
    <source>
    </source>
</evidence>
<evidence type="ECO:0000269" key="5">
    <source>
    </source>
</evidence>
<evidence type="ECO:0000269" key="6">
    <source>
    </source>
</evidence>
<evidence type="ECO:0000269" key="7">
    <source>
    </source>
</evidence>
<evidence type="ECO:0000269" key="8">
    <source>
    </source>
</evidence>
<evidence type="ECO:0000269" key="9">
    <source>
    </source>
</evidence>
<evidence type="ECO:0000269" key="10">
    <source>
    </source>
</evidence>
<evidence type="ECO:0000269" key="11">
    <source>
    </source>
</evidence>
<evidence type="ECO:0000269" key="12">
    <source>
    </source>
</evidence>
<evidence type="ECO:0000269" key="13">
    <source>
    </source>
</evidence>
<evidence type="ECO:0000269" key="14">
    <source>
    </source>
</evidence>
<evidence type="ECO:0000269" key="15">
    <source>
    </source>
</evidence>
<evidence type="ECO:0000269" key="16">
    <source>
    </source>
</evidence>
<evidence type="ECO:0000269" key="17">
    <source>
    </source>
</evidence>
<evidence type="ECO:0000269" key="18">
    <source>
    </source>
</evidence>
<evidence type="ECO:0000269" key="19">
    <source>
    </source>
</evidence>
<evidence type="ECO:0000269" key="20">
    <source>
    </source>
</evidence>
<evidence type="ECO:0000269" key="21">
    <source>
    </source>
</evidence>
<evidence type="ECO:0000269" key="22">
    <source>
    </source>
</evidence>
<evidence type="ECO:0000269" key="23">
    <source>
    </source>
</evidence>
<evidence type="ECO:0000269" key="24">
    <source>
    </source>
</evidence>
<evidence type="ECO:0000269" key="25">
    <source>
    </source>
</evidence>
<evidence type="ECO:0000269" key="26">
    <source>
    </source>
</evidence>
<evidence type="ECO:0000269" key="27">
    <source>
    </source>
</evidence>
<evidence type="ECO:0000269" key="28">
    <source>
    </source>
</evidence>
<evidence type="ECO:0000269" key="29">
    <source>
    </source>
</evidence>
<evidence type="ECO:0000269" key="30">
    <source>
    </source>
</evidence>
<evidence type="ECO:0000303" key="31">
    <source>
    </source>
</evidence>
<evidence type="ECO:0000305" key="32"/>
<evidence type="ECO:0000305" key="33">
    <source>
    </source>
</evidence>
<evidence type="ECO:0000305" key="34">
    <source>
    </source>
</evidence>
<evidence type="ECO:0000305" key="35">
    <source>
    </source>
</evidence>
<evidence type="ECO:0000305" key="36">
    <source>
    </source>
</evidence>
<evidence type="ECO:0000312" key="37">
    <source>
        <dbReference type="EMBL" id="EAL24449.1"/>
    </source>
</evidence>
<evidence type="ECO:0000312" key="38">
    <source>
        <dbReference type="HGNC" id="HGNC:4162"/>
    </source>
</evidence>
<evidence type="ECO:0007744" key="39">
    <source>
        <dbReference type="PDB" id="2ZT5"/>
    </source>
</evidence>
<evidence type="ECO:0007744" key="40">
    <source>
        <dbReference type="PDB" id="2ZT6"/>
    </source>
</evidence>
<evidence type="ECO:0007744" key="41">
    <source>
        <dbReference type="PDB" id="2ZT7"/>
    </source>
</evidence>
<evidence type="ECO:0007744" key="42">
    <source>
        <dbReference type="PDB" id="2ZT8"/>
    </source>
</evidence>
<evidence type="ECO:0007744" key="43">
    <source>
        <dbReference type="PDB" id="2ZXF"/>
    </source>
</evidence>
<evidence type="ECO:0007744" key="44">
    <source>
        <dbReference type="PDB" id="4KQE"/>
    </source>
</evidence>
<evidence type="ECO:0007744" key="45">
    <source>
        <dbReference type="PDB" id="4KR2"/>
    </source>
</evidence>
<evidence type="ECO:0007744" key="46">
    <source>
        <dbReference type="PDB" id="4KR3"/>
    </source>
</evidence>
<evidence type="ECO:0007744" key="47">
    <source>
        <dbReference type="PDB" id="4QEI"/>
    </source>
</evidence>
<evidence type="ECO:0007744" key="48">
    <source>
        <dbReference type="PDB" id="5E6M"/>
    </source>
</evidence>
<evidence type="ECO:0007744" key="49">
    <source>
    </source>
</evidence>
<evidence type="ECO:0007744" key="50">
    <source>
    </source>
</evidence>
<evidence type="ECO:0007829" key="51">
    <source>
        <dbReference type="PDB" id="2PME"/>
    </source>
</evidence>
<evidence type="ECO:0007829" key="52">
    <source>
        <dbReference type="PDB" id="2PMF"/>
    </source>
</evidence>
<evidence type="ECO:0007829" key="53">
    <source>
        <dbReference type="PDB" id="2Q5I"/>
    </source>
</evidence>
<evidence type="ECO:0007829" key="54">
    <source>
        <dbReference type="PDB" id="2ZT5"/>
    </source>
</evidence>
<evidence type="ECO:0007829" key="55">
    <source>
        <dbReference type="PDB" id="2ZXF"/>
    </source>
</evidence>
<evidence type="ECO:0007829" key="56">
    <source>
        <dbReference type="PDB" id="4KQE"/>
    </source>
</evidence>
<evidence type="ECO:0007829" key="57">
    <source>
        <dbReference type="PDB" id="4KR3"/>
    </source>
</evidence>
<evidence type="ECO:0007829" key="58">
    <source>
        <dbReference type="PDB" id="5E6M"/>
    </source>
</evidence>